<evidence type="ECO:0000250" key="1"/>
<evidence type="ECO:0000250" key="2">
    <source>
        <dbReference type="UniProtKB" id="Q9JIQ8"/>
    </source>
</evidence>
<evidence type="ECO:0000255" key="3"/>
<evidence type="ECO:0000255" key="4">
    <source>
        <dbReference type="PROSITE-ProRule" id="PRU00124"/>
    </source>
</evidence>
<evidence type="ECO:0000255" key="5">
    <source>
        <dbReference type="PROSITE-ProRule" id="PRU00196"/>
    </source>
</evidence>
<evidence type="ECO:0000255" key="6">
    <source>
        <dbReference type="PROSITE-ProRule" id="PRU00274"/>
    </source>
</evidence>
<evidence type="ECO:0000269" key="7">
    <source>
    </source>
</evidence>
<evidence type="ECO:0000269" key="8">
    <source>
    </source>
</evidence>
<evidence type="ECO:0000269" key="9">
    <source>
    </source>
</evidence>
<evidence type="ECO:0000269" key="10">
    <source>
    </source>
</evidence>
<evidence type="ECO:0000269" key="11">
    <source>
    </source>
</evidence>
<evidence type="ECO:0000269" key="12">
    <source>
    </source>
</evidence>
<evidence type="ECO:0000269" key="13">
    <source>
    </source>
</evidence>
<evidence type="ECO:0000269" key="14">
    <source>
    </source>
</evidence>
<evidence type="ECO:0000269" key="15">
    <source>
    </source>
</evidence>
<evidence type="ECO:0000269" key="16">
    <source>
    </source>
</evidence>
<evidence type="ECO:0000269" key="17">
    <source>
    </source>
</evidence>
<evidence type="ECO:0000269" key="18">
    <source>
    </source>
</evidence>
<evidence type="ECO:0000269" key="19">
    <source>
    </source>
</evidence>
<evidence type="ECO:0000269" key="20">
    <source>
    </source>
</evidence>
<evidence type="ECO:0000269" key="21">
    <source>
    </source>
</evidence>
<evidence type="ECO:0000269" key="22">
    <source>
    </source>
</evidence>
<evidence type="ECO:0000269" key="23">
    <source>
    </source>
</evidence>
<evidence type="ECO:0000269" key="24">
    <source>
    </source>
</evidence>
<evidence type="ECO:0000269" key="25">
    <source>
    </source>
</evidence>
<evidence type="ECO:0000269" key="26">
    <source>
    </source>
</evidence>
<evidence type="ECO:0000269" key="27">
    <source>
    </source>
</evidence>
<evidence type="ECO:0000269" key="28">
    <source>
    </source>
</evidence>
<evidence type="ECO:0000269" key="29">
    <source>
    </source>
</evidence>
<evidence type="ECO:0000269" key="30">
    <source>
    </source>
</evidence>
<evidence type="ECO:0000269" key="31">
    <source>
    </source>
</evidence>
<evidence type="ECO:0000269" key="32">
    <source>
    </source>
</evidence>
<evidence type="ECO:0000269" key="33">
    <source ref="21"/>
</evidence>
<evidence type="ECO:0000303" key="34">
    <source>
    </source>
</evidence>
<evidence type="ECO:0000305" key="35"/>
<evidence type="ECO:0000305" key="36">
    <source>
    </source>
</evidence>
<evidence type="ECO:0000312" key="37">
    <source>
        <dbReference type="HGNC" id="HGNC:11876"/>
    </source>
</evidence>
<evidence type="ECO:0007744" key="38">
    <source>
        <dbReference type="PDB" id="7MEQ"/>
    </source>
</evidence>
<evidence type="ECO:0007744" key="39">
    <source>
        <dbReference type="PDB" id="7XYD"/>
    </source>
</evidence>
<evidence type="ECO:0007744" key="40">
    <source>
        <dbReference type="PDB" id="7Y0E"/>
    </source>
</evidence>
<evidence type="ECO:0007744" key="41">
    <source>
        <dbReference type="PDB" id="7Y0F"/>
    </source>
</evidence>
<evidence type="ECO:0007744" key="42">
    <source>
        <dbReference type="PDB" id="8HD8"/>
    </source>
</evidence>
<evidence type="ECO:0007744" key="43">
    <source>
        <dbReference type="PDB" id="8S0L"/>
    </source>
</evidence>
<evidence type="ECO:0007744" key="44">
    <source>
        <dbReference type="PDB" id="8S0M"/>
    </source>
</evidence>
<evidence type="ECO:0007744" key="45">
    <source>
        <dbReference type="PDB" id="8S0N"/>
    </source>
</evidence>
<evidence type="ECO:0007744" key="46">
    <source>
        <dbReference type="PDB" id="8VGT"/>
    </source>
</evidence>
<evidence type="ECO:0007744" key="47">
    <source>
        <dbReference type="PDB" id="8Y7X"/>
    </source>
</evidence>
<evidence type="ECO:0007744" key="48">
    <source>
        <dbReference type="PDB" id="8Y7Y"/>
    </source>
</evidence>
<evidence type="ECO:0007744" key="49">
    <source>
        <dbReference type="PDB" id="8Y87"/>
    </source>
</evidence>
<evidence type="ECO:0007744" key="50">
    <source>
        <dbReference type="PDB" id="8Y88"/>
    </source>
</evidence>
<evidence type="ECO:0007744" key="51">
    <source>
        <dbReference type="PDB" id="8Y89"/>
    </source>
</evidence>
<evidence type="ECO:0007744" key="52">
    <source>
        <dbReference type="PDB" id="8Y8A"/>
    </source>
</evidence>
<evidence type="ECO:0007744" key="53">
    <source>
        <dbReference type="PDB" id="8Y8B"/>
    </source>
</evidence>
<evidence type="ECO:0007829" key="54">
    <source>
        <dbReference type="PDB" id="7MEQ"/>
    </source>
</evidence>
<evidence type="ECO:0007829" key="55">
    <source>
        <dbReference type="PDB" id="7Y0E"/>
    </source>
</evidence>
<evidence type="ECO:0007829" key="56">
    <source>
        <dbReference type="PDB" id="7Y0F"/>
    </source>
</evidence>
<evidence type="ECO:0007829" key="57">
    <source>
        <dbReference type="PDB" id="8HD8"/>
    </source>
</evidence>
<evidence type="ECO:0007829" key="58">
    <source>
        <dbReference type="PDB" id="8JI0"/>
    </source>
</evidence>
<evidence type="ECO:0007829" key="59">
    <source>
        <dbReference type="PDB" id="8S0L"/>
    </source>
</evidence>
<evidence type="ECO:0007829" key="60">
    <source>
        <dbReference type="PDB" id="8S0N"/>
    </source>
</evidence>
<evidence type="ECO:0007829" key="61">
    <source>
        <dbReference type="PDB" id="8V04"/>
    </source>
</evidence>
<evidence type="ECO:0007829" key="62">
    <source>
        <dbReference type="PDB" id="8V1F"/>
    </source>
</evidence>
<evidence type="ECO:0007829" key="63">
    <source>
        <dbReference type="PDB" id="8VGT"/>
    </source>
</evidence>
<evidence type="ECO:0007829" key="64">
    <source>
        <dbReference type="PDB" id="8Y1D"/>
    </source>
</evidence>
<comment type="function">
    <text evidence="2 10 19 20 23 27 28 30">Plasma membrane-anchored serine protease that cleaves at arginine residues (PubMed:32703818, PubMed:35676539, PubMed:37990007, PubMed:38964328). Participates in proteolytic cascades of relevance for the normal physiologic function of the prostate (PubMed:25122198). Androgen-induced TMPRSS2 activates several substrates that include pro-hepatocyte growth factor/HGF, the protease activated receptor-2/F2RL1 or matriptase/ST14 leading to extracellular matrix disruption and metastasis of prostate cancer cells (PubMed:15537383, PubMed:25122198, PubMed:26018085). In addition, activates trigeminal neurons and contribute to both spontaneous pain and mechanical allodynia (By similarity).</text>
</comment>
<comment type="function">
    <text evidence="13 14 15 16 17 18 21 22 23 25 26 27 28">(Microbial infection) Facilitates human coronaviruses SARS-CoV and SARS-CoV-2 infections via two independent mechanisms, proteolytic cleavage of ACE2 receptor which promotes viral uptake, and cleavage of coronavirus spike glycoproteins which activates the glycoprotein for host cell entry (PubMed:24227843, PubMed:32142651, PubMed:32404436, PubMed:33051876, PubMed:34159616, PubMed:35676539, PubMed:37990007). The cleavage of SARS-COV2 spike glycoprotein occurs between the S2 and S2' site (PubMed:32703818). Upon SARS-CoV-2 infection, increases syncytia formation by accelerating the fusion process (PubMed:33051876, PubMed:34159616, PubMed:35676539). Proteolytically cleaves and activates the spike glycoproteins of human coronavirus 229E (HCoV-229E) and human coronavirus EMC (HCoV-EMC) and the fusion glycoproteins F0 of Sendai virus (SeV), human metapneumovirus (HMPV), human parainfluenza 1, 2, 3, 4a and 4b viruses (HPIV). Essential for spread and pathogenesis of influenza A virus (strains H1N1, H3N2 and H7N9); involved in proteolytic cleavage and activation of hemagglutinin (HA) protein which is essential for viral infectivity.</text>
</comment>
<comment type="function">
    <text evidence="29 30 31">(Microbial infection) Receptor for human coronavirus HKU1-CoV, acts synergistically with disialoside glycans to facilitate the entry of the virus. After binding to cell-surface disialoside glycans, the viral S protein interacts with the inactive form of TMPRSS2 and inhibits its protease activity.</text>
</comment>
<comment type="catalytic activity">
    <reaction evidence="23 27 28 30">
        <text>The enzyme cleaves angiotensin-converting enzyme 2 (EC 3.4.17.23) and cleaves influenzea A and B virus and coronavirus spike glycoproteins at arginine residues.</text>
        <dbReference type="EC" id="3.4.21.122"/>
    </reaction>
</comment>
<comment type="subunit">
    <text evidence="13">The catalytically active form interacts with ACE2.</text>
</comment>
<comment type="interaction">
    <interactant intactId="EBI-12549863">
        <id>O15393</id>
    </interactant>
    <interactant intactId="EBI-7730807">
        <id>Q9BYF1</id>
        <label>ACE2</label>
    </interactant>
    <organismsDiffer>false</organismsDiffer>
    <experiments>3</experiments>
</comment>
<comment type="interaction">
    <interactant intactId="EBI-12549863">
        <id>O15393</id>
    </interactant>
    <interactant intactId="EBI-986224">
        <id>P01009</id>
        <label>SERPINA1</label>
    </interactant>
    <organismsDiffer>false</organismsDiffer>
    <experiments>2</experiments>
</comment>
<comment type="interaction">
    <interactant intactId="EBI-12345267">
        <id>O15393-2</id>
    </interactant>
    <interactant intactId="EBI-10827839">
        <id>Q15848</id>
        <label>ADIPOQ</label>
    </interactant>
    <organismsDiffer>false</organismsDiffer>
    <experiments>3</experiments>
</comment>
<comment type="interaction">
    <interactant intactId="EBI-12345267">
        <id>O15393-2</id>
    </interactant>
    <interactant intactId="EBI-12109402">
        <id>Q86W74-2</id>
        <label>ANKRD46</label>
    </interactant>
    <organismsDiffer>false</organismsDiffer>
    <experiments>3</experiments>
</comment>
<comment type="interaction">
    <interactant intactId="EBI-12345267">
        <id>O15393-2</id>
    </interactant>
    <interactant intactId="EBI-745213">
        <id>P29972</id>
        <label>AQP1</label>
    </interactant>
    <organismsDiffer>false</organismsDiffer>
    <experiments>3</experiments>
</comment>
<comment type="interaction">
    <interactant intactId="EBI-12345267">
        <id>O15393-2</id>
    </interactant>
    <interactant intactId="EBI-3922513">
        <id>O95393</id>
        <label>BMP10</label>
    </interactant>
    <organismsDiffer>false</organismsDiffer>
    <experiments>3</experiments>
</comment>
<comment type="interaction">
    <interactant intactId="EBI-12345267">
        <id>O15393-2</id>
    </interactant>
    <interactant intactId="EBI-752094">
        <id>Q12982</id>
        <label>BNIP2</label>
    </interactant>
    <organismsDiffer>false</organismsDiffer>
    <experiments>3</experiments>
</comment>
<comment type="interaction">
    <interactant intactId="EBI-12345267">
        <id>O15393-2</id>
    </interactant>
    <interactant intactId="EBI-749464">
        <id>Q12983</id>
        <label>BNIP3</label>
    </interactant>
    <organismsDiffer>false</organismsDiffer>
    <experiments>3</experiments>
</comment>
<comment type="interaction">
    <interactant intactId="EBI-12345267">
        <id>O15393-2</id>
    </interactant>
    <interactant intactId="EBI-12244618">
        <id>Q6PL45-2</id>
        <label>BRICD5</label>
    </interactant>
    <organismsDiffer>false</organismsDiffer>
    <experiments>3</experiments>
</comment>
<comment type="interaction">
    <interactant intactId="EBI-12345267">
        <id>O15393-2</id>
    </interactant>
    <interactant intactId="EBI-12062109">
        <id>Q86Z23</id>
        <label>C1QL4</label>
    </interactant>
    <organismsDiffer>false</organismsDiffer>
    <experiments>3</experiments>
</comment>
<comment type="interaction">
    <interactant intactId="EBI-12345267">
        <id>O15393-2</id>
    </interactant>
    <interactant intactId="EBI-12822627">
        <id>O14523</id>
        <label>C2CD2L</label>
    </interactant>
    <organismsDiffer>false</organismsDiffer>
    <experiments>3</experiments>
</comment>
<comment type="interaction">
    <interactant intactId="EBI-12345267">
        <id>O15393-2</id>
    </interactant>
    <interactant intactId="EBI-11579371">
        <id>Q9BXR6</id>
        <label>CFHR5</label>
    </interactant>
    <organismsDiffer>false</organismsDiffer>
    <experiments>3</experiments>
</comment>
<comment type="interaction">
    <interactant intactId="EBI-12345267">
        <id>O15393-2</id>
    </interactant>
    <interactant intactId="EBI-11989440">
        <id>Q9BXN2-6</id>
        <label>CLEC7A</label>
    </interactant>
    <organismsDiffer>false</organismsDiffer>
    <experiments>3</experiments>
</comment>
<comment type="interaction">
    <interactant intactId="EBI-12345267">
        <id>O15393-2</id>
    </interactant>
    <interactant intactId="EBI-6165897">
        <id>Q9NWW5</id>
        <label>CLN6</label>
    </interactant>
    <organismsDiffer>false</organismsDiffer>
    <experiments>3</experiments>
</comment>
<comment type="interaction">
    <interactant intactId="EBI-12345267">
        <id>O15393-2</id>
    </interactant>
    <interactant intactId="EBI-2807956">
        <id>Q96FZ5</id>
        <label>CMTM7</label>
    </interactant>
    <organismsDiffer>false</organismsDiffer>
    <experiments>3</experiments>
</comment>
<comment type="interaction">
    <interactant intactId="EBI-12345267">
        <id>O15393-2</id>
    </interactant>
    <interactant intactId="EBI-12815321">
        <id>Q6PI25</id>
        <label>CNIH2</label>
    </interactant>
    <organismsDiffer>false</organismsDiffer>
    <experiments>3</experiments>
</comment>
<comment type="interaction">
    <interactant intactId="EBI-12345267">
        <id>O15393-2</id>
    </interactant>
    <interactant intactId="EBI-12208021">
        <id>Q8TBE1</id>
        <label>CNIH3</label>
    </interactant>
    <organismsDiffer>false</organismsDiffer>
    <experiments>3</experiments>
</comment>
<comment type="interaction">
    <interactant intactId="EBI-12345267">
        <id>O15393-2</id>
    </interactant>
    <interactant intactId="EBI-12019274">
        <id>Q4LDR2</id>
        <label>CTXN3</label>
    </interactant>
    <organismsDiffer>false</organismsDiffer>
    <experiments>3</experiments>
</comment>
<comment type="interaction">
    <interactant intactId="EBI-12345267">
        <id>O15393-2</id>
    </interactant>
    <interactant intactId="EBI-3911467">
        <id>Q07325</id>
        <label>CXCL9</label>
    </interactant>
    <organismsDiffer>false</organismsDiffer>
    <experiments>3</experiments>
</comment>
<comment type="interaction">
    <interactant intactId="EBI-12345267">
        <id>O15393-2</id>
    </interactant>
    <interactant intactId="EBI-2680384">
        <id>Q9BQA9</id>
        <label>CYBC1</label>
    </interactant>
    <organismsDiffer>false</organismsDiffer>
    <experiments>3</experiments>
</comment>
<comment type="interaction">
    <interactant intactId="EBI-12345267">
        <id>O15393-2</id>
    </interactant>
    <interactant intactId="EBI-12074168">
        <id>P81534</id>
        <label>DEFB103B</label>
    </interactant>
    <organismsDiffer>false</organismsDiffer>
    <experiments>3</experiments>
</comment>
<comment type="interaction">
    <interactant intactId="EBI-12345267">
        <id>O15393-2</id>
    </interactant>
    <interactant intactId="EBI-10215665">
        <id>P56851</id>
        <label>EDDM3B</label>
    </interactant>
    <organismsDiffer>false</organismsDiffer>
    <experiments>3</experiments>
</comment>
<comment type="interaction">
    <interactant intactId="EBI-12345267">
        <id>O15393-2</id>
    </interactant>
    <interactant intactId="EBI-711490">
        <id>Q9UKR5</id>
        <label>ERG28</label>
    </interactant>
    <organismsDiffer>false</organismsDiffer>
    <experiments>3</experiments>
</comment>
<comment type="interaction">
    <interactant intactId="EBI-12345267">
        <id>O15393-2</id>
    </interactant>
    <interactant intactId="EBI-2876774">
        <id>Q92520</id>
        <label>FAM3C</label>
    </interactant>
    <organismsDiffer>false</organismsDiffer>
    <experiments>3</experiments>
</comment>
<comment type="interaction">
    <interactant intactId="EBI-12345267">
        <id>O15393-2</id>
    </interactant>
    <interactant intactId="EBI-12142299">
        <id>Q96IV6</id>
        <label>FAXDC2</label>
    </interactant>
    <organismsDiffer>false</organismsDiffer>
    <experiments>3</experiments>
</comment>
<comment type="interaction">
    <interactant intactId="EBI-12345267">
        <id>O15393-2</id>
    </interactant>
    <interactant intactId="EBI-720480">
        <id>P24593</id>
        <label>IGFBP5</label>
    </interactant>
    <organismsDiffer>false</organismsDiffer>
    <experiments>3</experiments>
</comment>
<comment type="interaction">
    <interactant intactId="EBI-12345267">
        <id>O15393-2</id>
    </interactant>
    <interactant intactId="EBI-2858252">
        <id>Q6ZSS7</id>
        <label>MFSD6</label>
    </interactant>
    <organismsDiffer>false</organismsDiffer>
    <experiments>3</experiments>
</comment>
<comment type="interaction">
    <interactant intactId="EBI-12345267">
        <id>O15393-2</id>
    </interactant>
    <interactant intactId="EBI-12179105">
        <id>O75425</id>
        <label>MOSPD3</label>
    </interactant>
    <organismsDiffer>false</organismsDiffer>
    <experiments>3</experiments>
</comment>
<comment type="interaction">
    <interactant intactId="EBI-12345267">
        <id>O15393-2</id>
    </interactant>
    <interactant intactId="EBI-10317425">
        <id>Q9NZG7</id>
        <label>NINJ2</label>
    </interactant>
    <organismsDiffer>false</organismsDiffer>
    <experiments>3</experiments>
</comment>
<comment type="interaction">
    <interactant intactId="EBI-12345267">
        <id>O15393-2</id>
    </interactant>
    <interactant intactId="EBI-12092917">
        <id>Q9UHJ9-5</id>
        <label>PGAP2</label>
    </interactant>
    <organismsDiffer>false</organismsDiffer>
    <experiments>3</experiments>
</comment>
<comment type="interaction">
    <interactant intactId="EBI-12345267">
        <id>O15393-2</id>
    </interactant>
    <interactant intactId="EBI-3919291">
        <id>Q9Y342</id>
        <label>PLLP</label>
    </interactant>
    <organismsDiffer>false</organismsDiffer>
    <experiments>3</experiments>
</comment>
<comment type="interaction">
    <interactant intactId="EBI-12345267">
        <id>O15393-2</id>
    </interactant>
    <interactant intactId="EBI-692836">
        <id>P26678</id>
        <label>PLN</label>
    </interactant>
    <organismsDiffer>false</organismsDiffer>
    <experiments>3</experiments>
</comment>
<comment type="interaction">
    <interactant intactId="EBI-12345267">
        <id>O15393-2</id>
    </interactant>
    <interactant intactId="EBI-12188331">
        <id>P60201-2</id>
        <label>PLP1</label>
    </interactant>
    <organismsDiffer>false</organismsDiffer>
    <experiments>3</experiments>
</comment>
<comment type="interaction">
    <interactant intactId="EBI-12345267">
        <id>O15393-2</id>
    </interactant>
    <interactant intactId="EBI-608347">
        <id>Q04941</id>
        <label>PLP2</label>
    </interactant>
    <organismsDiffer>false</organismsDiffer>
    <experiments>4</experiments>
</comment>
<comment type="interaction">
    <interactant intactId="EBI-12345267">
        <id>O15393-2</id>
    </interactant>
    <interactant intactId="EBI-14199621">
        <id>Q13635-3</id>
        <label>PTCH1</label>
    </interactant>
    <organismsDiffer>false</organismsDiffer>
    <experiments>3</experiments>
</comment>
<comment type="interaction">
    <interactant intactId="EBI-12345267">
        <id>O15393-2</id>
    </interactant>
    <interactant intactId="EBI-3906138">
        <id>P53801</id>
        <label>PTTG1IP</label>
    </interactant>
    <organismsDiffer>false</organismsDiffer>
    <experiments>3</experiments>
</comment>
<comment type="interaction">
    <interactant intactId="EBI-12345267">
        <id>O15393-2</id>
    </interactant>
    <interactant intactId="EBI-2684237">
        <id>O00767</id>
        <label>SCD</label>
    </interactant>
    <organismsDiffer>false</organismsDiffer>
    <experiments>4</experiments>
</comment>
<comment type="interaction">
    <interactant intactId="EBI-12345267">
        <id>O15393-2</id>
    </interactant>
    <interactant intactId="EBI-8652744">
        <id>Q96IW7</id>
        <label>SEC22A</label>
    </interactant>
    <organismsDiffer>false</organismsDiffer>
    <experiments>3</experiments>
</comment>
<comment type="interaction">
    <interactant intactId="EBI-12345267">
        <id>O15393-2</id>
    </interactant>
    <interactant intactId="EBI-9679163">
        <id>Q9Y6D0</id>
        <label>SELENOK</label>
    </interactant>
    <organismsDiffer>false</organismsDiffer>
    <experiments>3</experiments>
</comment>
<comment type="interaction">
    <interactant intactId="EBI-12345267">
        <id>O15393-2</id>
    </interactant>
    <interactant intactId="EBI-10197617">
        <id>P11686</id>
        <label>SFTPC</label>
    </interactant>
    <organismsDiffer>false</organismsDiffer>
    <experiments>3</experiments>
</comment>
<comment type="interaction">
    <interactant intactId="EBI-12345267">
        <id>O15393-2</id>
    </interactant>
    <interactant intactId="EBI-12870360">
        <id>P78382</id>
        <label>SLC35A1</label>
    </interactant>
    <organismsDiffer>false</organismsDiffer>
    <experiments>3</experiments>
</comment>
<comment type="interaction">
    <interactant intactId="EBI-12345267">
        <id>O15393-2</id>
    </interactant>
    <interactant intactId="EBI-10314552">
        <id>Q9NVC3</id>
        <label>SLC38A7</label>
    </interactant>
    <organismsDiffer>false</organismsDiffer>
    <experiments>3</experiments>
</comment>
<comment type="interaction">
    <interactant intactId="EBI-12345267">
        <id>O15393-2</id>
    </interactant>
    <interactant intactId="EBI-12188413">
        <id>B2RUZ4</id>
        <label>SMIM1</label>
    </interactant>
    <organismsDiffer>false</organismsDiffer>
    <experiments>3</experiments>
</comment>
<comment type="interaction">
    <interactant intactId="EBI-12345267">
        <id>O15393-2</id>
    </interactant>
    <interactant intactId="EBI-3221827">
        <id>O15400</id>
        <label>STX7</label>
    </interactant>
    <organismsDiffer>false</organismsDiffer>
    <experiments>4</experiments>
</comment>
<comment type="interaction">
    <interactant intactId="EBI-12345267">
        <id>O15393-2</id>
    </interactant>
    <interactant intactId="EBI-727240">
        <id>Q9UNK0</id>
        <label>STX8</label>
    </interactant>
    <organismsDiffer>false</organismsDiffer>
    <experiments>3</experiments>
</comment>
<comment type="interaction">
    <interactant intactId="EBI-12345267">
        <id>O15393-2</id>
    </interactant>
    <interactant intactId="EBI-723946">
        <id>P17152</id>
        <label>TMEM11</label>
    </interactant>
    <organismsDiffer>false</organismsDiffer>
    <experiments>3</experiments>
</comment>
<comment type="interaction">
    <interactant intactId="EBI-12345267">
        <id>O15393-2</id>
    </interactant>
    <interactant intactId="EBI-10171534">
        <id>A0PK00</id>
        <label>TMEM120B</label>
    </interactant>
    <organismsDiffer>false</organismsDiffer>
    <experiments>3</experiments>
</comment>
<comment type="interaction">
    <interactant intactId="EBI-12345267">
        <id>O15393-2</id>
    </interactant>
    <interactant intactId="EBI-10694905">
        <id>Q5BJH2-2</id>
        <label>TMEM128</label>
    </interactant>
    <organismsDiffer>false</organismsDiffer>
    <experiments>3</experiments>
</comment>
<comment type="interaction">
    <interactant intactId="EBI-12345267">
        <id>O15393-2</id>
    </interactant>
    <interactant intactId="EBI-10173151">
        <id>A2RU14</id>
        <label>TMEM218</label>
    </interactant>
    <organismsDiffer>false</organismsDiffer>
    <experiments>3</experiments>
</comment>
<comment type="interaction">
    <interactant intactId="EBI-12345267">
        <id>O15393-2</id>
    </interactant>
    <interactant intactId="EBI-347385">
        <id>Q9H0R3</id>
        <label>TMEM222</label>
    </interactant>
    <organismsDiffer>false</organismsDiffer>
    <experiments>3</experiments>
</comment>
<comment type="interaction">
    <interactant intactId="EBI-12345267">
        <id>O15393-2</id>
    </interactant>
    <interactant intactId="EBI-12195227">
        <id>Q8NBD8</id>
        <label>TMEM229B</label>
    </interactant>
    <organismsDiffer>false</organismsDiffer>
    <experiments>3</experiments>
</comment>
<comment type="interaction">
    <interactant intactId="EBI-12345267">
        <id>O15393-2</id>
    </interactant>
    <interactant intactId="EBI-12887458">
        <id>Q9BU79</id>
        <label>TMEM243</label>
    </interactant>
    <organismsDiffer>false</organismsDiffer>
    <experiments>3</experiments>
</comment>
<comment type="interaction">
    <interactant intactId="EBI-12345267">
        <id>O15393-2</id>
    </interactant>
    <interactant intactId="EBI-2852148">
        <id>Q9H2L4</id>
        <label>TMEM60</label>
    </interactant>
    <organismsDiffer>false</organismsDiffer>
    <experiments>3</experiments>
</comment>
<comment type="interaction">
    <interactant intactId="EBI-12345267">
        <id>O15393-2</id>
    </interactant>
    <interactant intactId="EBI-8649725">
        <id>Q9BSE2</id>
        <label>TMEM79</label>
    </interactant>
    <organismsDiffer>false</organismsDiffer>
    <experiments>3</experiments>
</comment>
<comment type="interaction">
    <interactant intactId="EBI-12345267">
        <id>O15393-2</id>
    </interactant>
    <interactant intactId="EBI-12015604">
        <id>Q8N2M4</id>
        <label>TMEM86A</label>
    </interactant>
    <organismsDiffer>false</organismsDiffer>
    <experiments>3</experiments>
</comment>
<comment type="interaction">
    <interactant intactId="EBI-12345267">
        <id>O15393-2</id>
    </interactant>
    <interactant intactId="EBI-2548832">
        <id>Q8N661</id>
        <label>TMEM86B</label>
    </interactant>
    <organismsDiffer>false</organismsDiffer>
    <experiments>3</experiments>
</comment>
<comment type="interaction">
    <interactant intactId="EBI-12345267">
        <id>O15393-2</id>
    </interactant>
    <interactant intactId="EBI-359977">
        <id>P01375</id>
        <label>TNF</label>
    </interactant>
    <organismsDiffer>false</organismsDiffer>
    <experiments>3</experiments>
</comment>
<comment type="interaction">
    <interactant intactId="EBI-12345267">
        <id>O15393-2</id>
    </interactant>
    <interactant intactId="EBI-10243654">
        <id>Q5BVD1</id>
        <label>TTMP</label>
    </interactant>
    <organismsDiffer>false</organismsDiffer>
    <experiments>5</experiments>
</comment>
<comment type="interaction">
    <interactant intactId="EBI-12345267">
        <id>O15393-2</id>
    </interactant>
    <interactant intactId="EBI-10179682">
        <id>O00526</id>
        <label>UPK2</label>
    </interactant>
    <organismsDiffer>false</organismsDiffer>
    <experiments>3</experiments>
</comment>
<comment type="interaction">
    <interactant intactId="EBI-12345267">
        <id>O15393-2</id>
    </interactant>
    <interactant intactId="EBI-10191195">
        <id>O95183</id>
        <label>VAMP5</label>
    </interactant>
    <organismsDiffer>false</organismsDiffer>
    <experiments>3</experiments>
</comment>
<comment type="interaction">
    <interactant intactId="EBI-12345267">
        <id>O15393-2</id>
    </interactant>
    <interactant intactId="EBI-6256462">
        <id>Q9BQB6</id>
        <label>VKORC1</label>
    </interactant>
    <organismsDiffer>false</organismsDiffer>
    <experiments>3</experiments>
</comment>
<comment type="interaction">
    <interactant intactId="EBI-12345267">
        <id>O15393-2</id>
    </interactant>
    <interactant intactId="EBI-718439">
        <id>O95159</id>
        <label>ZFPL1</label>
    </interactant>
    <organismsDiffer>false</organismsDiffer>
    <experiments>3</experiments>
</comment>
<comment type="subcellular location">
    <subcellularLocation>
        <location evidence="12 13 30">Cell membrane</location>
        <topology evidence="12 13">Single-pass type II membrane protein</topology>
    </subcellularLocation>
</comment>
<comment type="subcellular location">
    <molecule>Transmembrane protease serine 2 catalytic chain</molecule>
    <subcellularLocation>
        <location evidence="12">Secreted</location>
    </subcellularLocation>
    <text evidence="8 12 30">Activated by cleavage and secreted.</text>
</comment>
<comment type="alternative products">
    <event type="alternative splicing"/>
    <isoform>
        <id>O15393-1</id>
        <name>1</name>
        <sequence type="displayed"/>
    </isoform>
    <isoform>
        <id>O15393-2</id>
        <name>2</name>
        <sequence type="described" ref="VSP_045083"/>
    </isoform>
</comment>
<comment type="tissue specificity">
    <text evidence="7 12 14 22 33">Expressed in several tissues that comprise large populations of epithelial cells with the highest level of transcripts measured in the prostate gland. Expressed in type II pneumocytes in the lung (at protein level). Expressed strongly in small intestine. Also expressed in colon, stomach and salivary gland. Coexpressed with ACE2 within lung type II pneumocytes, ileal absorptive enterocytes, intestinal epithelial cells, cornea, gallbladder and nasal goblet secretory cells (Ref.21).</text>
</comment>
<comment type="induction">
    <text evidence="19">By androgenic hormones in vivo.</text>
</comment>
<comment type="PTM">
    <text evidence="8 29 30">Proteolytically processed; by an autocatalytic mechanism. Autocleavage induces active conformation.</text>
</comment>
<comment type="similarity">
    <text evidence="6">Belongs to the peptidase S1 family.</text>
</comment>
<comment type="online information" name="Atlas of Genetics and Cytogenetics in Oncology and Haematology">
    <link uri="https://atlasgeneticsoncology.org/gene/42592/TMPRSS2"/>
</comment>
<name>TMPS2_HUMAN</name>
<keyword id="KW-0002">3D-structure</keyword>
<keyword id="KW-0025">Alternative splicing</keyword>
<keyword id="KW-0068">Autocatalytic cleavage</keyword>
<keyword id="KW-1003">Cell membrane</keyword>
<keyword id="KW-1015">Disulfide bond</keyword>
<keyword id="KW-0325">Glycoprotein</keyword>
<keyword id="KW-0945">Host-virus interaction</keyword>
<keyword id="KW-0378">Hydrolase</keyword>
<keyword id="KW-0472">Membrane</keyword>
<keyword id="KW-0645">Protease</keyword>
<keyword id="KW-1267">Proteomics identification</keyword>
<keyword id="KW-1185">Reference proteome</keyword>
<keyword id="KW-0964">Secreted</keyword>
<keyword id="KW-0720">Serine protease</keyword>
<keyword id="KW-0735">Signal-anchor</keyword>
<keyword id="KW-0812">Transmembrane</keyword>
<keyword id="KW-1133">Transmembrane helix</keyword>
<keyword id="KW-0865">Zymogen</keyword>
<feature type="chain" id="PRO_0000027855" description="Transmembrane protease serine 2 non-catalytic chain">
    <location>
        <begin position="1"/>
        <end position="255"/>
    </location>
</feature>
<feature type="chain" id="PRO_0000027856" description="Transmembrane protease serine 2 catalytic chain">
    <location>
        <begin position="256"/>
        <end position="492"/>
    </location>
</feature>
<feature type="topological domain" description="Cytoplasmic" evidence="3">
    <location>
        <begin position="1"/>
        <end position="84"/>
    </location>
</feature>
<feature type="transmembrane region" description="Helical; Signal-anchor for type II membrane protein" evidence="3">
    <location>
        <begin position="85"/>
        <end position="105"/>
    </location>
</feature>
<feature type="topological domain" description="Extracellular" evidence="3">
    <location>
        <begin position="106"/>
        <end position="492"/>
    </location>
</feature>
<feature type="domain" description="LDL-receptor class A" evidence="4 28 39 40 41 42">
    <location>
        <begin position="118"/>
        <end position="148"/>
    </location>
</feature>
<feature type="domain" description="SRCR" evidence="5 28 39 40 41 42">
    <location>
        <begin position="149"/>
        <end position="242"/>
    </location>
</feature>
<feature type="domain" description="Peptidase S1" evidence="6 28 39 40 41 42">
    <location>
        <begin position="256"/>
        <end position="492"/>
    </location>
</feature>
<feature type="region of interest" description="HKU1-CoV S protein-binding" evidence="29 30">
    <location>
        <begin position="340"/>
        <end position="470"/>
    </location>
</feature>
<feature type="active site" description="Charge relay system" evidence="8 29">
    <location>
        <position position="296"/>
    </location>
</feature>
<feature type="active site" description="Charge relay system" evidence="36">
    <location>
        <position position="345"/>
    </location>
</feature>
<feature type="active site" description="Charge relay system" evidence="36">
    <location>
        <position position="441"/>
    </location>
</feature>
<feature type="binding site" evidence="28 29 39 40 41 42 43">
    <location>
        <position position="131"/>
    </location>
    <ligand>
        <name>Ca(2+)</name>
        <dbReference type="ChEBI" id="CHEBI:29108"/>
    </ligand>
</feature>
<feature type="binding site" evidence="28 29 39 40 41 42 43">
    <location>
        <position position="134"/>
    </location>
    <ligand>
        <name>Ca(2+)</name>
        <dbReference type="ChEBI" id="CHEBI:29108"/>
    </ligand>
</feature>
<feature type="binding site" evidence="28 29 39 40 41 42 43">
    <location>
        <position position="136"/>
    </location>
    <ligand>
        <name>Ca(2+)</name>
        <dbReference type="ChEBI" id="CHEBI:29108"/>
    </ligand>
</feature>
<feature type="binding site" evidence="28 29 39 40 41 42 43">
    <location>
        <position position="144"/>
    </location>
    <ligand>
        <name>Ca(2+)</name>
        <dbReference type="ChEBI" id="CHEBI:29108"/>
    </ligand>
</feature>
<feature type="binding site" evidence="28 29 39 40 41 42 43">
    <location>
        <position position="145"/>
    </location>
    <ligand>
        <name>Ca(2+)</name>
        <dbReference type="ChEBI" id="CHEBI:29108"/>
    </ligand>
</feature>
<feature type="site" description="Cleavage; by autolysis" evidence="8 30">
    <location>
        <begin position="255"/>
        <end position="256"/>
    </location>
</feature>
<feature type="glycosylation site" description="N-linked (GlcNAc...) asparagine" evidence="28 29 39 40 41 42 43 44">
    <location>
        <position position="213"/>
    </location>
</feature>
<feature type="glycosylation site" description="N-linked (GlcNAc...) asparagine" evidence="3">
    <location>
        <position position="249"/>
    </location>
</feature>
<feature type="disulfide bond" evidence="1">
    <location>
        <begin position="113"/>
        <end position="126"/>
    </location>
</feature>
<feature type="disulfide bond" evidence="28 29 41 42 43">
    <location>
        <begin position="120"/>
        <end position="139"/>
    </location>
</feature>
<feature type="disulfide bond" evidence="28 29 41 42 43">
    <location>
        <begin position="133"/>
        <end position="148"/>
    </location>
</feature>
<feature type="disulfide bond" evidence="27 28 29 38 41 42 43 45">
    <location>
        <begin position="172"/>
        <end position="231"/>
    </location>
</feature>
<feature type="disulfide bond" evidence="27 28 29 38 41 42 43 45">
    <location>
        <begin position="185"/>
        <end position="241"/>
    </location>
</feature>
<feature type="disulfide bond" description="Interchain (between non-catalytic and catalytic chains)" evidence="4 5 6 27 28 29 38 39 40 41 42 43">
    <location>
        <begin position="244"/>
        <end position="365"/>
    </location>
</feature>
<feature type="disulfide bond" evidence="27 29 38 43 45">
    <location>
        <begin position="281"/>
        <end position="297"/>
    </location>
</feature>
<feature type="disulfide bond" evidence="27 29 31 38 43 45 49 50 51 52">
    <location>
        <begin position="410"/>
        <end position="426"/>
    </location>
</feature>
<feature type="disulfide bond" evidence="27 29 31 38 43 45 49 50 51 52">
    <location>
        <begin position="437"/>
        <end position="465"/>
    </location>
</feature>
<feature type="splice variant" id="VSP_045083" description="In isoform 2." evidence="34">
    <original>M</original>
    <variation>MPPAPPGGESGCEERGAAGHIEHSRYLSLLDAVDNSKM</variation>
    <location>
        <position position="1"/>
    </location>
</feature>
<feature type="sequence variant" id="VAR_084538" evidence="24">
    <original>A</original>
    <variation>T</variation>
    <location>
        <position position="28"/>
    </location>
</feature>
<feature type="sequence variant" id="VAR_084539" evidence="24">
    <original>G</original>
    <variation>R</variation>
    <location>
        <position position="74"/>
    </location>
</feature>
<feature type="sequence variant" id="VAR_027674" description="In dbSNP:rs12329760." evidence="9 11 24 32">
    <original>V</original>
    <variation>M</variation>
    <location>
        <position position="160"/>
    </location>
</feature>
<feature type="sequence variant" id="VAR_038002" evidence="11">
    <original>S</original>
    <variation>C</variation>
    <location>
        <position position="254"/>
    </location>
</feature>
<feature type="sequence variant" id="VAR_038003" description="In dbSNP:rs775137340." evidence="11 32">
    <original>E</original>
    <variation>Q</variation>
    <location>
        <position position="329"/>
    </location>
</feature>
<feature type="sequence variant" id="VAR_011692" description="In dbSNP:rs1056602.">
    <original>K</original>
    <variation>N</variation>
    <location>
        <position position="449"/>
    </location>
</feature>
<feature type="sequence variant" id="VAR_038004" description="In dbSNP:rs779875214." evidence="11">
    <original>D</original>
    <variation>N</variation>
    <location>
        <position position="491"/>
    </location>
</feature>
<feature type="mutagenesis site" description="Loss of cleavage. No effect on HKU1-CoV viral entry." evidence="8 29">
    <original>R</original>
    <variation>Q</variation>
    <location>
        <position position="255"/>
    </location>
</feature>
<feature type="mutagenesis site" description="No effect on catalytic activity or HKU1-CoV viral entry." evidence="29">
    <original>R</original>
    <variation>A</variation>
    <location>
        <position position="316"/>
    </location>
</feature>
<feature type="mutagenesis site" description="No effect on HKU1-CoV viral entry." evidence="30">
    <original>K</original>
    <variation>D</variation>
    <location>
        <position position="340"/>
    </location>
</feature>
<feature type="mutagenesis site" description="No effect on catalytic activity or HKU1-CoV viral entry." evidence="29 30">
    <original>T</original>
    <variation>A</variation>
    <variation>S</variation>
    <location>
        <position position="341"/>
    </location>
</feature>
<feature type="mutagenesis site" description="No effect on catalytic activity. Reduces HKU1-CoV viral entry." evidence="29 30">
    <original>R</original>
    <variation>A</variation>
    <variation>T</variation>
    <location>
        <position position="409"/>
    </location>
</feature>
<feature type="mutagenesis site" description="No effect on catalytic activity. Reduces HKU1-CoV viral entry." evidence="29 30">
    <original>S</original>
    <variation>A</variation>
    <variation>N</variation>
    <location>
        <position position="412"/>
    </location>
</feature>
<feature type="mutagenesis site" description="No effect on catalytic activity. Reduces HKU1-CoV viral entry." evidence="29 30">
    <original>R</original>
    <variation>A</variation>
    <variation>K</variation>
    <variation>V</variation>
    <location>
        <position position="413"/>
    </location>
</feature>
<feature type="mutagenesis site" description="No effect on catalytic activity. Almost abolishes S protein-binding and HKU1-CoV viral entry." evidence="29 30 31">
    <original>Y</original>
    <variation>A</variation>
    <variation>S</variation>
    <variation>L</variation>
    <variation>R</variation>
    <location>
        <position position="414"/>
    </location>
</feature>
<feature type="mutagenesis site" description="No effect on HKU1-CoV viral entry." evidence="30">
    <original>V</original>
    <variation>I</variation>
    <location>
        <position position="415"/>
    </location>
</feature>
<feature type="mutagenesis site" description="No effect on catalytic activity. Almost abolishes HKU1-CoV viral entry." evidence="29">
    <original>Y</original>
    <variation>A</variation>
    <location>
        <position position="416"/>
    </location>
</feature>
<feature type="mutagenesis site" description="No effect on catalytic activity. Almost abolishes HKU1-CoV viral entry." evidence="29 30">
    <original>D</original>
    <variation>A</variation>
    <variation>N</variation>
    <location>
        <position position="417"/>
    </location>
</feature>
<feature type="mutagenesis site" description="No effect on catalytic activity. Abolishes HKU1-CoV viral entry." evidence="29 30">
    <original>L</original>
    <variation>R</variation>
    <variation>A</variation>
    <variation>M</variation>
    <location>
        <position position="419"/>
    </location>
</feature>
<feature type="mutagenesis site" description="No effect on catalytic activity. Abolishes HKU1-CoV viral entry." evidence="29">
    <original>L</original>
    <variation>R</variation>
    <location>
        <position position="430"/>
    </location>
</feature>
<feature type="mutagenesis site" description="No effect on catalytic activity or HKU1-CoV viral entry." evidence="29">
    <original>Q</original>
    <variation>A</variation>
    <location>
        <position position="431"/>
    </location>
</feature>
<feature type="mutagenesis site" description="No effect on catalytic activity or HKU1-CoV viral entry." evidence="29">
    <original>N</original>
    <variation>A</variation>
    <location>
        <position position="433"/>
    </location>
</feature>
<feature type="mutagenesis site" description="Loss of activity. No effect on HKU1-CoV viral entry." evidence="8 29 30 31">
    <original>S</original>
    <variation>A</variation>
    <location>
        <position position="441"/>
    </location>
</feature>
<feature type="mutagenesis site" description="No effect on catalytic activity. Abolishes HKU1-CoV S protein-binding and viral entry." evidence="29 30">
    <original>W</original>
    <variation>A</variation>
    <location>
        <position position="461"/>
    </location>
</feature>
<feature type="mutagenesis site" description="No effect on catalytic activity. Reduces HKU1-CoV viral entry." evidence="29 30">
    <original>S</original>
    <variation>A</variation>
    <variation>T</variation>
    <variation>Y</variation>
    <variation>F</variation>
    <location>
        <position position="463"/>
    </location>
</feature>
<feature type="mutagenesis site" description="No effect on catalytic activity. Reduces HKU1-CoV viral entry." evidence="29">
    <original>K</original>
    <variation>A</variation>
    <location>
        <position position="467"/>
    </location>
</feature>
<feature type="mutagenesis site" description="No effect on HKU1-CoV viral entry." evidence="30">
    <original>A</original>
    <variation>P</variation>
    <location>
        <position position="468"/>
    </location>
</feature>
<feature type="mutagenesis site" description="No effect on catalytic activity. Reduces HKU1-CoV viral entry." evidence="29 30 31">
    <original>Y</original>
    <variation>A</variation>
    <variation>N</variation>
    <variation>L</variation>
    <location>
        <position position="469"/>
    </location>
</feature>
<feature type="mutagenesis site" description="No effect on catalytic activity. Abolishes HKU1-CoV S protein-binding and viral entry." evidence="29 30 31">
    <original>R</original>
    <variation>A</variation>
    <variation>K</variation>
    <location>
        <position position="470"/>
    </location>
</feature>
<feature type="sequence conflict" description="In Ref. 4; BAF84502." evidence="35" ref="4">
    <original>Y</original>
    <variation>H</variation>
    <location>
        <position position="26"/>
    </location>
</feature>
<feature type="sequence conflict" description="In Ref. 4; BAH12445." evidence="35" ref="4">
    <original>N</original>
    <variation>S</variation>
    <location>
        <position position="62"/>
    </location>
</feature>
<feature type="sequence conflict" description="In Ref. 4; BAF84502." evidence="35" ref="4">
    <original>S</original>
    <variation>P</variation>
    <location>
        <position position="163"/>
    </location>
</feature>
<feature type="sequence conflict" description="In Ref. 1; AAC51784." evidence="35" ref="1">
    <original>I</original>
    <variation>L</variation>
    <location>
        <position position="242"/>
    </location>
</feature>
<feature type="sequence conflict" description="In Ref. 1; AAC51784." evidence="35" ref="1">
    <original>RAD</original>
    <variation>KAN</variation>
    <location>
        <begin position="489"/>
        <end position="491"/>
    </location>
</feature>
<feature type="helix" evidence="57">
    <location>
        <begin position="114"/>
        <end position="116"/>
    </location>
</feature>
<feature type="strand" evidence="56">
    <location>
        <begin position="117"/>
        <end position="119"/>
    </location>
</feature>
<feature type="strand" evidence="55">
    <location>
        <begin position="122"/>
        <end position="124"/>
    </location>
</feature>
<feature type="helix" evidence="59">
    <location>
        <begin position="129"/>
        <end position="131"/>
    </location>
</feature>
<feature type="strand" evidence="59">
    <location>
        <begin position="134"/>
        <end position="136"/>
    </location>
</feature>
<feature type="strand" evidence="63">
    <location>
        <begin position="139"/>
        <end position="141"/>
    </location>
</feature>
<feature type="helix" evidence="59">
    <location>
        <begin position="143"/>
        <end position="145"/>
    </location>
</feature>
<feature type="strand" evidence="61">
    <location>
        <begin position="149"/>
        <end position="152"/>
    </location>
</feature>
<feature type="turn" evidence="61">
    <location>
        <begin position="153"/>
        <end position="156"/>
    </location>
</feature>
<feature type="strand" evidence="61">
    <location>
        <begin position="157"/>
        <end position="162"/>
    </location>
</feature>
<feature type="turn" evidence="61">
    <location>
        <begin position="163"/>
        <end position="166"/>
    </location>
</feature>
<feature type="strand" evidence="61">
    <location>
        <begin position="167"/>
        <end position="172"/>
    </location>
</feature>
<feature type="helix" evidence="61">
    <location>
        <begin position="178"/>
        <end position="187"/>
    </location>
</feature>
<feature type="turn" evidence="58">
    <location>
        <begin position="188"/>
        <end position="192"/>
    </location>
</feature>
<feature type="strand" evidence="61">
    <location>
        <begin position="196"/>
        <end position="200"/>
    </location>
</feature>
<feature type="strand" evidence="61">
    <location>
        <begin position="210"/>
        <end position="212"/>
    </location>
</feature>
<feature type="strand" evidence="59">
    <location>
        <begin position="214"/>
        <end position="216"/>
    </location>
</feature>
<feature type="helix" evidence="61">
    <location>
        <begin position="221"/>
        <end position="224"/>
    </location>
</feature>
<feature type="strand" evidence="61">
    <location>
        <begin position="225"/>
        <end position="227"/>
    </location>
</feature>
<feature type="strand" evidence="64">
    <location>
        <begin position="232"/>
        <end position="234"/>
    </location>
</feature>
<feature type="strand" evidence="61">
    <location>
        <begin position="236"/>
        <end position="240"/>
    </location>
</feature>
<feature type="strand" evidence="64">
    <location>
        <begin position="256"/>
        <end position="259"/>
    </location>
</feature>
<feature type="turn" evidence="61">
    <location>
        <begin position="264"/>
        <end position="266"/>
    </location>
</feature>
<feature type="strand" evidence="61">
    <location>
        <begin position="270"/>
        <end position="275"/>
    </location>
</feature>
<feature type="strand" evidence="61">
    <location>
        <begin position="278"/>
        <end position="293"/>
    </location>
</feature>
<feature type="helix" evidence="61">
    <location>
        <begin position="295"/>
        <end position="298"/>
    </location>
</feature>
<feature type="turn" evidence="55">
    <location>
        <begin position="300"/>
        <end position="303"/>
    </location>
</feature>
<feature type="helix" evidence="61">
    <location>
        <begin position="305"/>
        <end position="307"/>
    </location>
</feature>
<feature type="strand" evidence="61">
    <location>
        <begin position="309"/>
        <end position="313"/>
    </location>
</feature>
<feature type="helix" evidence="61">
    <location>
        <begin position="317"/>
        <end position="319"/>
    </location>
</feature>
<feature type="turn" evidence="56">
    <location>
        <begin position="322"/>
        <end position="324"/>
    </location>
</feature>
<feature type="strand" evidence="61">
    <location>
        <begin position="325"/>
        <end position="333"/>
    </location>
</feature>
<feature type="turn" evidence="61">
    <location>
        <begin position="339"/>
        <end position="342"/>
    </location>
</feature>
<feature type="strand" evidence="61">
    <location>
        <begin position="347"/>
        <end position="353"/>
    </location>
</feature>
<feature type="strand" evidence="54">
    <location>
        <begin position="358"/>
        <end position="360"/>
    </location>
</feature>
<feature type="strand" evidence="61">
    <location>
        <begin position="378"/>
        <end position="384"/>
    </location>
</feature>
<feature type="strand" evidence="64">
    <location>
        <begin position="386"/>
        <end position="390"/>
    </location>
</feature>
<feature type="strand" evidence="61">
    <location>
        <begin position="398"/>
        <end position="405"/>
    </location>
</feature>
<feature type="helix" evidence="61">
    <location>
        <begin position="407"/>
        <end position="410"/>
    </location>
</feature>
<feature type="turn" evidence="61">
    <location>
        <begin position="413"/>
        <end position="418"/>
    </location>
</feature>
<feature type="strand" evidence="61">
    <location>
        <begin position="424"/>
        <end position="428"/>
    </location>
</feature>
<feature type="strand" evidence="60">
    <location>
        <begin position="430"/>
        <end position="432"/>
    </location>
</feature>
<feature type="strand" evidence="61">
    <location>
        <begin position="433"/>
        <end position="435"/>
    </location>
</feature>
<feature type="turn" evidence="62">
    <location>
        <begin position="438"/>
        <end position="442"/>
    </location>
</feature>
<feature type="strand" evidence="61">
    <location>
        <begin position="444"/>
        <end position="449"/>
    </location>
</feature>
<feature type="strand" evidence="61">
    <location>
        <begin position="452"/>
        <end position="461"/>
    </location>
</feature>
<feature type="strand" evidence="61">
    <location>
        <begin position="463"/>
        <end position="466"/>
    </location>
</feature>
<feature type="strand" evidence="61">
    <location>
        <begin position="472"/>
        <end position="476"/>
    </location>
</feature>
<feature type="helix" evidence="61">
    <location>
        <begin position="477"/>
        <end position="490"/>
    </location>
</feature>
<feature type="sequence variant" id="VAR_084541" description="In dbSNP:rs200291871." evidence="24">
    <original>G</original>
    <variation>R</variation>
    <location sequence="O15393-2">
        <position position="8"/>
    </location>
</feature>
<feature type="sequence variant" id="VAR_084540" description="In dbSNP:rs75603675." evidence="24">
    <original>G</original>
    <variation>V</variation>
    <location sequence="O15393-2">
        <position position="8"/>
    </location>
</feature>
<gene>
    <name evidence="37" type="primary">TMPRSS2</name>
    <name type="synonym">PRSS10</name>
</gene>
<protein>
    <recommendedName>
        <fullName evidence="35">Transmembrane protease serine 2</fullName>
        <ecNumber evidence="23 27 28 30">3.4.21.122</ecNumber>
    </recommendedName>
    <alternativeName>
        <fullName evidence="35">Serine protease 10</fullName>
    </alternativeName>
    <component>
        <recommendedName>
            <fullName>Transmembrane protease serine 2 non-catalytic chain</fullName>
        </recommendedName>
    </component>
    <component>
        <recommendedName>
            <fullName>Transmembrane protease serine 2 catalytic chain</fullName>
        </recommendedName>
    </component>
</protein>
<sequence>MALNSGSPPAIGPYYENHGYQPENPYPAQPTVVPTVYEVHPAQYYPSPVPQYAPRVLTQASNPVVCTQPKSPSGTVCTSKTKKALCITLTLGTFLVGAALAAGLLWKFMGSKCSNSGIECDSSGTCINPSNWCDGVSHCPGGEDENRCVRLYGPNFILQVYSSQRKSWHPVCQDDWNENYGRAACRDMGYKNNFYSSQGIVDDSGSTSFMKLNTSAGNVDIYKKLYHSDACSSKAVVSLRCIACGVNLNSSRQSRIVGGESALPGAWPWQVSLHVQNVHVCGGSIITPEWIVTAAHCVEKPLNNPWHWTAFAGILRQSFMFYGAGYQVEKVISHPNYDSKTKNNDIALMKLQKPLTFNDLVKPVCLPNPGMMLQPEQLCWISGWGATEEKGKTSEVLNAAKVLLIETQRCNSRYVYDNLITPAMICAGFLQGNVDSCQGDSGGPLVTSKNNIWWLIGDTSWGSGCAKAYRPGVYGNVMVFTDWIYRQMRADG</sequence>
<reference key="1">
    <citation type="journal article" date="1997" name="Genomics">
        <title>Cloning of the TMPRSS2 gene, which encodes a novel serine protease with transmembrane, LDLRA, and SRCR domains and maps to 21q22.3.</title>
        <authorList>
            <person name="Paoloni-Giacobino A."/>
            <person name="Chen H."/>
            <person name="Peitsch M.C."/>
            <person name="Rossier C."/>
            <person name="Antonarakis S.E."/>
        </authorList>
    </citation>
    <scope>NUCLEOTIDE SEQUENCE [MRNA] (ISOFORM 1)</scope>
    <scope>VARIANTS MET-160 AND GLN-329</scope>
</reference>
<reference key="2">
    <citation type="journal article" date="2001" name="Genomics">
        <title>Mutation analyses of 268 candidate genes in human tumor cell lines.</title>
        <authorList>
            <person name="Teng D.-H."/>
            <person name="Chen Y."/>
            <person name="Lian L."/>
            <person name="Ha P.C."/>
            <person name="Tavtigian S.V."/>
            <person name="Wong A.K.C."/>
        </authorList>
    </citation>
    <scope>NUCLEOTIDE SEQUENCE [MRNA] (ISOFORM 1)</scope>
    <scope>VARIANT MET-160</scope>
</reference>
<reference key="3">
    <citation type="journal article" date="2001" name="Cancer Res.">
        <title>Catalytic cleavage of the androgen-regulated TMPRSS2 protease results in its secretion by prostate and prostate cancer epithelia.</title>
        <authorList>
            <person name="Afar D.E.H."/>
            <person name="Vivanco I."/>
            <person name="Hubert R.S."/>
            <person name="Kuo J."/>
            <person name="Chen E."/>
            <person name="Saffran D.C."/>
            <person name="Raitano A.B."/>
            <person name="Jakobovits A."/>
        </authorList>
    </citation>
    <scope>NUCLEOTIDE SEQUENCE [MRNA] (ISOFORM 1)</scope>
    <scope>MUTAGENESIS OF SER-441</scope>
    <scope>FUNCTION</scope>
    <scope>SUBCELLULAR LOCATION</scope>
</reference>
<reference key="4">
    <citation type="journal article" date="2004" name="Nat. Genet.">
        <title>Complete sequencing and characterization of 21,243 full-length human cDNAs.</title>
        <authorList>
            <person name="Ota T."/>
            <person name="Suzuki Y."/>
            <person name="Nishikawa T."/>
            <person name="Otsuki T."/>
            <person name="Sugiyama T."/>
            <person name="Irie R."/>
            <person name="Wakamatsu A."/>
            <person name="Hayashi K."/>
            <person name="Sato H."/>
            <person name="Nagai K."/>
            <person name="Kimura K."/>
            <person name="Makita H."/>
            <person name="Sekine M."/>
            <person name="Obayashi M."/>
            <person name="Nishi T."/>
            <person name="Shibahara T."/>
            <person name="Tanaka T."/>
            <person name="Ishii S."/>
            <person name="Yamamoto J."/>
            <person name="Saito K."/>
            <person name="Kawai Y."/>
            <person name="Isono Y."/>
            <person name="Nakamura Y."/>
            <person name="Nagahari K."/>
            <person name="Murakami K."/>
            <person name="Yasuda T."/>
            <person name="Iwayanagi T."/>
            <person name="Wagatsuma M."/>
            <person name="Shiratori A."/>
            <person name="Sudo H."/>
            <person name="Hosoiri T."/>
            <person name="Kaku Y."/>
            <person name="Kodaira H."/>
            <person name="Kondo H."/>
            <person name="Sugawara M."/>
            <person name="Takahashi M."/>
            <person name="Kanda K."/>
            <person name="Yokoi T."/>
            <person name="Furuya T."/>
            <person name="Kikkawa E."/>
            <person name="Omura Y."/>
            <person name="Abe K."/>
            <person name="Kamihara K."/>
            <person name="Katsuta N."/>
            <person name="Sato K."/>
            <person name="Tanikawa M."/>
            <person name="Yamazaki M."/>
            <person name="Ninomiya K."/>
            <person name="Ishibashi T."/>
            <person name="Yamashita H."/>
            <person name="Murakawa K."/>
            <person name="Fujimori K."/>
            <person name="Tanai H."/>
            <person name="Kimata M."/>
            <person name="Watanabe M."/>
            <person name="Hiraoka S."/>
            <person name="Chiba Y."/>
            <person name="Ishida S."/>
            <person name="Ono Y."/>
            <person name="Takiguchi S."/>
            <person name="Watanabe S."/>
            <person name="Yosida M."/>
            <person name="Hotuta T."/>
            <person name="Kusano J."/>
            <person name="Kanehori K."/>
            <person name="Takahashi-Fujii A."/>
            <person name="Hara H."/>
            <person name="Tanase T.-O."/>
            <person name="Nomura Y."/>
            <person name="Togiya S."/>
            <person name="Komai F."/>
            <person name="Hara R."/>
            <person name="Takeuchi K."/>
            <person name="Arita M."/>
            <person name="Imose N."/>
            <person name="Musashino K."/>
            <person name="Yuuki H."/>
            <person name="Oshima A."/>
            <person name="Sasaki N."/>
            <person name="Aotsuka S."/>
            <person name="Yoshikawa Y."/>
            <person name="Matsunawa H."/>
            <person name="Ichihara T."/>
            <person name="Shiohata N."/>
            <person name="Sano S."/>
            <person name="Moriya S."/>
            <person name="Momiyama H."/>
            <person name="Satoh N."/>
            <person name="Takami S."/>
            <person name="Terashima Y."/>
            <person name="Suzuki O."/>
            <person name="Nakagawa S."/>
            <person name="Senoh A."/>
            <person name="Mizoguchi H."/>
            <person name="Goto Y."/>
            <person name="Shimizu F."/>
            <person name="Wakebe H."/>
            <person name="Hishigaki H."/>
            <person name="Watanabe T."/>
            <person name="Sugiyama A."/>
            <person name="Takemoto M."/>
            <person name="Kawakami B."/>
            <person name="Yamazaki M."/>
            <person name="Watanabe K."/>
            <person name="Kumagai A."/>
            <person name="Itakura S."/>
            <person name="Fukuzumi Y."/>
            <person name="Fujimori Y."/>
            <person name="Komiyama M."/>
            <person name="Tashiro H."/>
            <person name="Tanigami A."/>
            <person name="Fujiwara T."/>
            <person name="Ono T."/>
            <person name="Yamada K."/>
            <person name="Fujii Y."/>
            <person name="Ozaki K."/>
            <person name="Hirao M."/>
            <person name="Ohmori Y."/>
            <person name="Kawabata A."/>
            <person name="Hikiji T."/>
            <person name="Kobatake N."/>
            <person name="Inagaki H."/>
            <person name="Ikema Y."/>
            <person name="Okamoto S."/>
            <person name="Okitani R."/>
            <person name="Kawakami T."/>
            <person name="Noguchi S."/>
            <person name="Itoh T."/>
            <person name="Shigeta K."/>
            <person name="Senba T."/>
            <person name="Matsumura K."/>
            <person name="Nakajima Y."/>
            <person name="Mizuno T."/>
            <person name="Morinaga M."/>
            <person name="Sasaki M."/>
            <person name="Togashi T."/>
            <person name="Oyama M."/>
            <person name="Hata H."/>
            <person name="Watanabe M."/>
            <person name="Komatsu T."/>
            <person name="Mizushima-Sugano J."/>
            <person name="Satoh T."/>
            <person name="Shirai Y."/>
            <person name="Takahashi Y."/>
            <person name="Nakagawa K."/>
            <person name="Okumura K."/>
            <person name="Nagase T."/>
            <person name="Nomura N."/>
            <person name="Kikuchi H."/>
            <person name="Masuho Y."/>
            <person name="Yamashita R."/>
            <person name="Nakai K."/>
            <person name="Yada T."/>
            <person name="Nakamura Y."/>
            <person name="Ohara O."/>
            <person name="Isogai T."/>
            <person name="Sugano S."/>
        </authorList>
    </citation>
    <scope>NUCLEOTIDE SEQUENCE [LARGE SCALE MRNA] (ISOFORMS 1 AND 2)</scope>
    <source>
        <tissue>Prostate</tissue>
        <tissue>Testis</tissue>
        <tissue>Tongue</tissue>
    </source>
</reference>
<reference key="5">
    <citation type="submission" date="2005-04" db="EMBL/GenBank/DDBJ databases">
        <authorList>
            <person name="Suzuki Y."/>
            <person name="Sugano S."/>
            <person name="Totoki Y."/>
            <person name="Toyoda A."/>
            <person name="Takeda T."/>
            <person name="Sakaki Y."/>
            <person name="Tanaka A."/>
            <person name="Yokoyama S."/>
        </authorList>
    </citation>
    <scope>NUCLEOTIDE SEQUENCE [LARGE SCALE MRNA] (ISOFORM 1)</scope>
    <source>
        <tissue>Liver</tissue>
    </source>
</reference>
<reference key="6">
    <citation type="journal article" date="2000" name="Nature">
        <title>The DNA sequence of human chromosome 21.</title>
        <authorList>
            <person name="Hattori M."/>
            <person name="Fujiyama A."/>
            <person name="Taylor T.D."/>
            <person name="Watanabe H."/>
            <person name="Yada T."/>
            <person name="Park H.-S."/>
            <person name="Toyoda A."/>
            <person name="Ishii K."/>
            <person name="Totoki Y."/>
            <person name="Choi D.-K."/>
            <person name="Groner Y."/>
            <person name="Soeda E."/>
            <person name="Ohki M."/>
            <person name="Takagi T."/>
            <person name="Sakaki Y."/>
            <person name="Taudien S."/>
            <person name="Blechschmidt K."/>
            <person name="Polley A."/>
            <person name="Menzel U."/>
            <person name="Delabar J."/>
            <person name="Kumpf K."/>
            <person name="Lehmann R."/>
            <person name="Patterson D."/>
            <person name="Reichwald K."/>
            <person name="Rump A."/>
            <person name="Schillhabel M."/>
            <person name="Schudy A."/>
            <person name="Zimmermann W."/>
            <person name="Rosenthal A."/>
            <person name="Kudoh J."/>
            <person name="Shibuya K."/>
            <person name="Kawasaki K."/>
            <person name="Asakawa S."/>
            <person name="Shintani A."/>
            <person name="Sasaki T."/>
            <person name="Nagamine K."/>
            <person name="Mitsuyama S."/>
            <person name="Antonarakis S.E."/>
            <person name="Minoshima S."/>
            <person name="Shimizu N."/>
            <person name="Nordsiek G."/>
            <person name="Hornischer K."/>
            <person name="Brandt P."/>
            <person name="Scharfe M."/>
            <person name="Schoen O."/>
            <person name="Desario A."/>
            <person name="Reichelt J."/>
            <person name="Kauer G."/>
            <person name="Bloecker H."/>
            <person name="Ramser J."/>
            <person name="Beck A."/>
            <person name="Klages S."/>
            <person name="Hennig S."/>
            <person name="Riesselmann L."/>
            <person name="Dagand E."/>
            <person name="Wehrmeyer S."/>
            <person name="Borzym K."/>
            <person name="Gardiner K."/>
            <person name="Nizetic D."/>
            <person name="Francis F."/>
            <person name="Lehrach H."/>
            <person name="Reinhardt R."/>
            <person name="Yaspo M.-L."/>
        </authorList>
    </citation>
    <scope>NUCLEOTIDE SEQUENCE [LARGE SCALE GENOMIC DNA]</scope>
</reference>
<reference key="7">
    <citation type="submission" date="2005-09" db="EMBL/GenBank/DDBJ databases">
        <authorList>
            <person name="Mural R.J."/>
            <person name="Istrail S."/>
            <person name="Sutton G.G."/>
            <person name="Florea L."/>
            <person name="Halpern A.L."/>
            <person name="Mobarry C.M."/>
            <person name="Lippert R."/>
            <person name="Walenz B."/>
            <person name="Shatkay H."/>
            <person name="Dew I."/>
            <person name="Miller J.R."/>
            <person name="Flanigan M.J."/>
            <person name="Edwards N.J."/>
            <person name="Bolanos R."/>
            <person name="Fasulo D."/>
            <person name="Halldorsson B.V."/>
            <person name="Hannenhalli S."/>
            <person name="Turner R."/>
            <person name="Yooseph S."/>
            <person name="Lu F."/>
            <person name="Nusskern D.R."/>
            <person name="Shue B.C."/>
            <person name="Zheng X.H."/>
            <person name="Zhong F."/>
            <person name="Delcher A.L."/>
            <person name="Huson D.H."/>
            <person name="Kravitz S.A."/>
            <person name="Mouchard L."/>
            <person name="Reinert K."/>
            <person name="Remington K.A."/>
            <person name="Clark A.G."/>
            <person name="Waterman M.S."/>
            <person name="Eichler E.E."/>
            <person name="Adams M.D."/>
            <person name="Hunkapiller M.W."/>
            <person name="Myers E.W."/>
            <person name="Venter J.C."/>
        </authorList>
    </citation>
    <scope>NUCLEOTIDE SEQUENCE [LARGE SCALE GENOMIC DNA]</scope>
</reference>
<reference key="8">
    <citation type="journal article" date="2004" name="Genome Res.">
        <title>The status, quality, and expansion of the NIH full-length cDNA project: the Mammalian Gene Collection (MGC).</title>
        <authorList>
            <consortium name="The MGC Project Team"/>
        </authorList>
    </citation>
    <scope>NUCLEOTIDE SEQUENCE [LARGE SCALE MRNA] (ISOFORM 1)</scope>
    <source>
        <tissue>PNS</tissue>
    </source>
</reference>
<reference key="9">
    <citation type="journal article" date="2001" name="J. Pathol.">
        <title>Expression of transmembrane serine protease TMPRSS2 in mouse and human tissues.</title>
        <authorList>
            <person name="Vaarala M.H."/>
            <person name="Porvari K.S."/>
            <person name="Kellokumpu S."/>
            <person name="Kyllonen A.P."/>
            <person name="Vihko P.T."/>
        </authorList>
    </citation>
    <scope>TISSUE SPECIFICITY</scope>
</reference>
<reference key="10">
    <citation type="journal article" date="2005" name="Biochem. J.">
        <title>The membrane-anchored serine protease, TMPRSS2, activates PAR-2 in prostate cancer cells.</title>
        <authorList>
            <person name="Wilson S."/>
            <person name="Greer B."/>
            <person name="Hooper J."/>
            <person name="Zijlstra A."/>
            <person name="Walker B."/>
            <person name="Quigley J."/>
            <person name="Hawthorne S."/>
        </authorList>
    </citation>
    <scope>FUNCTION</scope>
</reference>
<reference key="11">
    <citation type="journal article" date="2010" name="Am. J. Pathol.">
        <title>TMPRSS2, a serine protease expressed in the prostate on the apical surface of luminal epithelial cells and released into semen in prostasomes, is misregulated in prostate cancer cells.</title>
        <authorList>
            <person name="Chen Y.W."/>
            <person name="Lee M.S."/>
            <person name="Lucht A."/>
            <person name="Chou F.P."/>
            <person name="Huang W."/>
            <person name="Havighurst T.C."/>
            <person name="Kim K."/>
            <person name="Wang J.K."/>
            <person name="Antalis T.M."/>
            <person name="Johnson M.D."/>
            <person name="Lin C.Y."/>
        </authorList>
    </citation>
    <scope>IDENTIFICATION BY MASS SPECTROMETRY</scope>
    <scope>SUBCELLULAR LOCATION</scope>
    <scope>TISSUE SPECIFICITY</scope>
    <scope>GLYCOSYLATION</scope>
</reference>
<reference key="12">
    <citation type="journal article" date="2011" name="J. Virol.">
        <title>A transmembrane serine protease is linked to the severe acute respiratory syndrome coronavirus receptor and activates virus entry.</title>
        <authorList>
            <person name="Shulla A."/>
            <person name="Heald-Sargent T."/>
            <person name="Subramanya G."/>
            <person name="Zhao J."/>
            <person name="Perlman S."/>
            <person name="Gallagher T."/>
        </authorList>
    </citation>
    <scope>FUNCTION (MICROBIAL INFECTION)</scope>
    <scope>SUBCELLULAR LOCATION</scope>
    <scope>AUTOCATALYTIC CLEAVAGE</scope>
    <scope>INTERACTION WITH ACE2</scope>
</reference>
<reference key="13">
    <citation type="journal article" date="2011" name="J. Virol.">
        <title>Evidence that TMPRSS2 activates the severe acute respiratory syndrome coronavirus spike protein for membrane fusion and reduces viral control by the humoral immune response.</title>
        <authorList>
            <person name="Glowacka I."/>
            <person name="Bertram S."/>
            <person name="Muller M.A."/>
            <person name="Allen P."/>
            <person name="Soilleux E."/>
            <person name="Pfefferle S."/>
            <person name="Steffen I."/>
            <person name="Tsegaye T.S."/>
            <person name="He Y."/>
            <person name="Gnirss K."/>
            <person name="Niemeyer D."/>
            <person name="Schneider H."/>
            <person name="Drosten C."/>
            <person name="Pohlmann S."/>
        </authorList>
    </citation>
    <scope>FUNCTION (MICROBIAL INFECTION)</scope>
    <scope>TISSUE SPECIFICITY</scope>
</reference>
<reference key="14">
    <citation type="journal article" date="2013" name="J. Virol.">
        <title>TMPRSS2 activates the human coronavirus 229E for cathepsin-independent host cell entry and is expressed in viral target cells in the respiratory epithelium.</title>
        <authorList>
            <person name="Bertram S."/>
            <person name="Dijkman R."/>
            <person name="Habjan M."/>
            <person name="Heurich A."/>
            <person name="Gierer S."/>
            <person name="Glowacka I."/>
            <person name="Welsch K."/>
            <person name="Winkler M."/>
            <person name="Schneider H."/>
            <person name="Hofmann-Winkler H."/>
            <person name="Thiel V."/>
            <person name="Pohlmann S."/>
        </authorList>
    </citation>
    <scope>FUNCTION (MICROBIAL INFECTION)</scope>
</reference>
<reference key="15">
    <citation type="journal article" date="2013" name="J. Virol.">
        <title>TMPRSS2 is an activating protease for respiratory parainfluenza viruses.</title>
        <authorList>
            <person name="Abe M."/>
            <person name="Tahara M."/>
            <person name="Sakai K."/>
            <person name="Yamaguchi H."/>
            <person name="Kanou K."/>
            <person name="Shirato K."/>
            <person name="Kawase M."/>
            <person name="Noda M."/>
            <person name="Kimura H."/>
            <person name="Matsuyama S."/>
            <person name="Fukuhara H."/>
            <person name="Mizuta K."/>
            <person name="Maenaka K."/>
            <person name="Ami Y."/>
            <person name="Esumi M."/>
            <person name="Kato A."/>
            <person name="Takeda M."/>
        </authorList>
    </citation>
    <scope>FUNCTION (MICROBIAL INFECTION)</scope>
</reference>
<reference key="16">
    <citation type="journal article" date="2013" name="J. Virol.">
        <title>Middle East respiratory syndrome coronavirus infection mediated by the transmembrane serine protease TMPRSS2.</title>
        <authorList>
            <person name="Shirato K."/>
            <person name="Kawase M."/>
            <person name="Matsuyama S."/>
        </authorList>
    </citation>
    <scope>FUNCTION (MICROBIAL INFECTION)</scope>
</reference>
<reference key="17">
    <citation type="journal article" date="2014" name="J. Virol.">
        <title>TMPRSS2 and ADAM17 cleave ACE2 differentially and only proteolysis by TMPRSS2 augments entry driven by the severe acute respiratory syndrome coronavirus spike protein.</title>
        <authorList>
            <person name="Heurich A."/>
            <person name="Hofmann-Winkler H."/>
            <person name="Gierer S."/>
            <person name="Liepold T."/>
            <person name="Jahn O."/>
            <person name="Poehlmann S."/>
        </authorList>
    </citation>
    <scope>FUNCTION (MICROBIAL INFECTION)</scope>
</reference>
<reference key="18">
    <citation type="journal article" date="2014" name="Cancer Discov.">
        <title>The androgen-regulated protease TMPRSS2 activates a proteolytic cascade involving components of the tumor microenvironment and promotes prostate cancer metastasis.</title>
        <authorList>
            <person name="Lucas J.M."/>
            <person name="Heinlein C."/>
            <person name="Kim T."/>
            <person name="Hernandez S.A."/>
            <person name="Malik M.S."/>
            <person name="True L.D."/>
            <person name="Morrissey C."/>
            <person name="Corey E."/>
            <person name="Montgomery B."/>
            <person name="Mostaghel E."/>
            <person name="Clegg N."/>
            <person name="Coleman I."/>
            <person name="Brown C.M."/>
            <person name="Schneider E.L."/>
            <person name="Craik C."/>
            <person name="Simon J.A."/>
            <person name="Bedalov A."/>
            <person name="Nelson P.S."/>
        </authorList>
    </citation>
    <scope>FUNCTION</scope>
    <scope>INDUCTION</scope>
</reference>
<reference key="19">
    <citation type="journal article" date="2015" name="Cancer Res.">
        <title>Androgen-Induced TMPRSS2 activates matriptase and promotes extracellular matrix degradation, prostate cancer cell invasion, tumor growth, and metastasis.</title>
        <authorList>
            <person name="Ko C.J."/>
            <person name="Huang C.C."/>
            <person name="Lin H.Y."/>
            <person name="Juan C.P."/>
            <person name="Lan S.W."/>
            <person name="Shyu H.Y."/>
            <person name="Wu S.R."/>
            <person name="Hsiao P.W."/>
            <person name="Huang H.P."/>
            <person name="Shun C.T."/>
            <person name="Lee M.S."/>
        </authorList>
    </citation>
    <scope>FUNCTION</scope>
</reference>
<reference key="20">
    <citation type="journal article" date="2020" name="Cell">
        <title>SARS-CoV-2 cell entry depends on ACE2 and TMPRSS2 and is blocked by a clinically proven protease inhibitor.</title>
        <authorList>
            <person name="Hoffmann M."/>
            <person name="Kleine-Weber H."/>
            <person name="Schroeder S."/>
            <person name="Krueger N."/>
            <person name="Herrler T."/>
            <person name="Erichsen S."/>
            <person name="Schiergens T.S."/>
            <person name="Herrler G."/>
            <person name="Wu N.H."/>
            <person name="Nitsche A."/>
            <person name="Mueller M.A."/>
            <person name="Drosten C."/>
            <person name="Poehlmann S."/>
        </authorList>
    </citation>
    <scope>FUNCTION (MICROBIAL INFECTION)</scope>
</reference>
<reference key="21">
    <citation type="journal article" date="2020" name="Cell">
        <title>SARS-CoV-2 receptor ACE2 is an interferon-stimulated gene in human airway epithelial cells and is detected in specific cell subsets across tissues.</title>
        <authorList>
            <person name="Ziegler C.G.K."/>
            <person name="Allon S.J."/>
            <person name="Nyquist S.K."/>
            <person name="Mbano I.M."/>
            <person name="Miao V.N."/>
            <person name="Tzouanas C.N."/>
            <person name="Cao Y."/>
            <person name="Yousif A.S."/>
            <person name="Bals J."/>
            <person name="Hauser B.M."/>
            <person name="Feldman J."/>
            <person name="Muus C."/>
            <person name="Wadsworth M.H."/>
            <person name="Kazer S.W."/>
            <person name="Hughes T.K."/>
            <person name="Doran B."/>
            <person name="Gatter G.J."/>
            <person name="Vukovic M."/>
            <person name="Taliaferro F."/>
            <person name="Mead B.E."/>
            <person name="Guo Z."/>
            <person name="Wang J.P."/>
            <person name="Gras D."/>
            <person name="Plaisant M."/>
            <person name="Ansari M."/>
            <person name="Angelidis I."/>
            <person name="Adler H."/>
            <person name="Sucre J.M.S."/>
            <person name="Taylor C.J."/>
            <person name="Lin B."/>
            <person name="Waghray A."/>
            <person name="Mitsialis V."/>
            <person name="Dwyer D.F."/>
            <person name="Buchheit K.M."/>
            <person name="Boyce J.A."/>
            <person name="Barrett N.A."/>
            <person name="Laidlaw T.M."/>
            <person name="Carroll S.L."/>
            <person name="Colonna L."/>
            <person name="Tkachev V."/>
            <person name="Peterson C.W."/>
            <person name="Yu A."/>
            <person name="Zheng H.B."/>
            <person name="Gideon H.P."/>
            <person name="Winchell C.G."/>
            <person name="Lin P.L."/>
            <person name="Bingle C.D."/>
            <person name="Snapper S.B."/>
            <person name="Kropski J.A."/>
            <person name="Theis F.J."/>
            <person name="Schiller H.B."/>
            <person name="Zaragosi L.E."/>
            <person name="Barbry P."/>
            <person name="Leslie A."/>
            <person name="Kiem H.P."/>
            <person name="Flynn J.L."/>
            <person name="Fortune S.M."/>
            <person name="Berger B."/>
            <person name="Finberg R.W."/>
            <person name="Kean L.S."/>
            <person name="Garber M."/>
            <person name="Schmidt A.G."/>
            <person name="Lingwood D."/>
            <person name="Shalek A.K."/>
            <person name="Ordovas-Montanes J."/>
        </authorList>
    </citation>
    <scope>TISSUE SPECIFICITY</scope>
</reference>
<reference key="22">
    <citation type="journal article" date="2020" name="EMBO J.">
        <title>Syncytia formation by SARS-CoV-2-infected cells.</title>
        <authorList>
            <person name="Buchrieser J."/>
            <person name="Dufloo J."/>
            <person name="Hubert M."/>
            <person name="Monel B."/>
            <person name="Planas D."/>
            <person name="Rajah M.M."/>
            <person name="Planchais C."/>
            <person name="Porrot F."/>
            <person name="Guivel-Benhassine F."/>
            <person name="Van der Werf S."/>
            <person name="Casartelli N."/>
            <person name="Mouquet H."/>
            <person name="Bruel T."/>
            <person name="Schwartz O."/>
        </authorList>
    </citation>
    <scope>FUNCTION (MICROBIAL INFECTION)</scope>
</reference>
<reference key="23">
    <citation type="journal article" date="2021" name="EMBO J.">
        <title>Syncytia formation by SARS-CoV-2-infected cells.</title>
        <authorList>
            <person name="Buchrieser J."/>
            <person name="Dufloo J."/>
            <person name="Hubert M."/>
            <person name="Monel B."/>
            <person name="Planas D."/>
            <person name="Rajah M.M."/>
            <person name="Planchais C."/>
            <person name="Porrot F."/>
            <person name="Guivel-Benhassine F."/>
            <person name="Van der Werf S."/>
            <person name="Casartelli N."/>
            <person name="Mouquet H."/>
            <person name="Bruel T."/>
            <person name="Schwartz O."/>
        </authorList>
    </citation>
    <scope>ERRATUM OF PUBMED:33051876</scope>
</reference>
<reference key="24">
    <citation type="journal article" date="2020" name="Life. Sci Alliance">
        <title>TMPRSS2 and furin are both essential for proteolytic activation of SARS-CoV-2 in human airway cells.</title>
        <authorList>
            <person name="Bestle D."/>
            <person name="Heindl M.R."/>
            <person name="Limburg H."/>
            <person name="Van Lam van T."/>
            <person name="Pilgram O."/>
            <person name="Moulton H."/>
            <person name="Stein D.A."/>
            <person name="Hardes K."/>
            <person name="Eickmann M."/>
            <person name="Dolnik O."/>
            <person name="Rohde C."/>
            <person name="Klenk H.D."/>
            <person name="Garten W."/>
            <person name="Steinmetzer T."/>
            <person name="Boettcher-Friebertshaeuser E."/>
        </authorList>
    </citation>
    <scope>FUNCTION (MICROBIAL INFECTION)</scope>
    <scope>FUNCTION</scope>
</reference>
<reference key="25">
    <citation type="journal article" date="2020" name="Nat. Med.">
        <title>SARS-CoV-2 entry factors are highly expressed in nasal epithelial cells together with innate immune genes.</title>
        <authorList>
            <consortium name="HCA Lung Biological Network"/>
            <person name="Sungnak W."/>
            <person name="Huang N."/>
            <person name="Becavin C."/>
            <person name="Berg M."/>
            <person name="Queen R."/>
            <person name="Litvinukova M."/>
            <person name="Talavera-Lopez C."/>
            <person name="Maatz H."/>
            <person name="Reichart D."/>
            <person name="Sampaziotis F."/>
            <person name="Worlock K.B."/>
            <person name="Yoshida M."/>
            <person name="Barnes J.L."/>
        </authorList>
    </citation>
    <scope>TISSUE SPECIFICITY</scope>
</reference>
<reference key="26">
    <citation type="journal article" date="2020" name="Sci. Immunol.">
        <title>TMPRSS2 and TMPRSS4 promote SARS-CoV-2 infection of human small intestinal enterocytes.</title>
        <authorList>
            <person name="Zang R."/>
            <person name="Gomez Castro M.F."/>
            <person name="McCune B.T."/>
            <person name="Zeng Q."/>
            <person name="Rothlauf P.W."/>
            <person name="Sonnek N.M."/>
            <person name="Liu Z."/>
            <person name="Brulois K.F."/>
            <person name="Wang X."/>
            <person name="Greenberg H.B."/>
            <person name="Diamond M.S."/>
            <person name="Ciorba M.A."/>
            <person name="Whelan S.P.J."/>
            <person name="Ding S."/>
        </authorList>
    </citation>
    <scope>FUNCTION (MICROBIAL INFECTION)</scope>
    <scope>TISSUE SPECIFICITY</scope>
</reference>
<reference key="27">
    <citation type="journal article" date="2021" name="EMBO J.">
        <title>TMPRSS2 expression dictates the entry route used by SARS-CoV-2 to infect host cells.</title>
        <authorList>
            <person name="Koch J."/>
            <person name="Uckeley Z.M."/>
            <person name="Doldan P."/>
            <person name="Stanifer M."/>
            <person name="Boulant S."/>
            <person name="Lozach P.Y."/>
        </authorList>
    </citation>
    <scope>FUNCTION (MICROBIAL INFECTION)</scope>
</reference>
<reference evidence="38" key="28">
    <citation type="journal article" date="2022" name="Nat. Chem. Biol.">
        <title>Structure and activity of human TMPRSS2 protease implicated in SARS-CoV-2 activation.</title>
        <authorList>
            <person name="Fraser B.J."/>
            <person name="Beldar S."/>
            <person name="Seitova A."/>
            <person name="Hutchinson A."/>
            <person name="Mannar D."/>
            <person name="Li Y."/>
            <person name="Kwon D."/>
            <person name="Tan R."/>
            <person name="Wilson R.P."/>
            <person name="Leopold K."/>
            <person name="Subramaniam S."/>
            <person name="Halabelian L."/>
            <person name="Arrowsmith C.H."/>
            <person name="Benard F."/>
        </authorList>
    </citation>
    <scope>X-RAY CRYSTALLOGRAPHY (1.95 ANGSTROMS) OF 109-492 IN COMPLEX WITH AN INHIBITOR</scope>
    <scope>CYSTEINE-BONDS</scope>
    <scope>FUNCTION</scope>
    <scope>CATALYTIC ACTIVITY</scope>
    <scope>FUNCTION (MICROBIAL INFECTION)</scope>
</reference>
<reference evidence="39 40 41 42" key="29">
    <citation type="journal article" date="2023" name="Nat. Commun.">
        <title>Structure-based discovery of dual pathway inhibitors for SARS-CoV-2 entry.</title>
        <authorList>
            <person name="Wang H."/>
            <person name="Yang Q."/>
            <person name="Liu X."/>
            <person name="Xu Z."/>
            <person name="Shao M."/>
            <person name="Li D."/>
            <person name="Duan Y."/>
            <person name="Tang J."/>
            <person name="Yu X."/>
            <person name="Zhang Y."/>
            <person name="Hao A."/>
            <person name="Wang Y."/>
            <person name="Chen J."/>
            <person name="Zhu C."/>
            <person name="Guddat L."/>
            <person name="Chen H."/>
            <person name="Zhang L."/>
            <person name="Chen X."/>
            <person name="Jiang B."/>
            <person name="Sun L."/>
            <person name="Rao Z."/>
            <person name="Yang H."/>
        </authorList>
    </citation>
    <scope>X-RAY CRYSTALLOGRAPHY (2.39 ANGSTROMS) OF 109-254 AND 256-492 IN COMPLEX WITH CA(2+) AND INHIBITORS</scope>
    <scope>GLYCOSYLATION AT ASN-213</scope>
    <scope>FUNCTION</scope>
    <scope>CATALYTIC ACTIVITY</scope>
    <scope>CYSTEINE-BONDS</scope>
</reference>
<reference evidence="46" key="30">
    <citation type="journal article" date="2024" name="Cell">
        <title>Human coronavirus HKU1 recognition of the TMPRSS2 host receptor.</title>
        <authorList>
            <person name="McCallum M."/>
            <person name="Park Y.J."/>
            <person name="Stewart C."/>
            <person name="Sprouse K.R."/>
            <person name="Addetia A."/>
            <person name="Brown J."/>
            <person name="Tortorici M.A."/>
            <person name="Gibson C."/>
            <person name="Wong E."/>
            <person name="Ieven M."/>
            <person name="Telenti A."/>
            <person name="Veesler D."/>
        </authorList>
    </citation>
    <scope>STRUCTURE BY ELECTRON MICROSCOPY (2.90 ANGSTROMS) OF 109-492 IN COMPLEX WITH HUMAN CORONAVIRUS HKU1 SPIKE PROTEIN</scope>
    <scope>FUNCTION (MICROBIAL INFECTION)</scope>
    <scope>AUTOCLEAVAGE</scope>
    <scope>MUTAGENESIS OF LYS-340; THR-341; ARG-409; SER-412; ARG-413; TYR-414; VAL-415; ASP-417; LEU-419; SER-441; TRP-461; SER-463; ALA-468; TYR-469 AND ARG-470</scope>
    <scope>FUNCTION</scope>
    <scope>CATALYTIC ACTIVITY</scope>
    <scope>SUBCELLULAR LOCATION</scope>
</reference>
<reference evidence="43 44 45" key="31">
    <citation type="journal article" date="2024" name="Cell">
        <title>Structural basis of TMPRSS2 zymogen activation and recognition by the HKU1 seasonal coronavirus.</title>
        <authorList>
            <person name="Fernandez I."/>
            <person name="Saunders N."/>
            <person name="Duquerroy S."/>
            <person name="Bolland W.H."/>
            <person name="Arbabian A."/>
            <person name="Baquero E."/>
            <person name="Blanc C."/>
            <person name="Lafaye P."/>
            <person name="Haouz A."/>
            <person name="Buchrieser J."/>
            <person name="Schwartz O."/>
            <person name="Rey F.A."/>
        </authorList>
    </citation>
    <scope>X-RAY CRYSTALLOGRAPHY (1.80 ANGSTROMS) OF 107-492 IN COMPLEX WITH CA(2+) AND HUMAN CORONAVIRUS HKU1 SPIKE PROTEIN</scope>
    <scope>GLYCOSYLATION AT ASN-213</scope>
    <scope>ACTIVE SITE</scope>
    <scope>MUTAGENESIS OF ARG-255; ARG-316; THR-341; ARG-409; SER-412; ARG-413; TYR-414; TYR-416; ASP-417; LEU-419; LEU-430; GLN-431; ASN-433; SER-441; TRP-461; SER-463; LYS-467; TYR-469 AND ARG-470</scope>
    <scope>FUNCTION (MICROBIAL INFECTION)</scope>
    <scope>AUTOCLEAVAGE</scope>
    <scope>CYSTEINE-BONDS</scope>
</reference>
<reference evidence="47 48 49 50 51 52 53" key="32">
    <citation type="journal article" date="2024" name="Cell">
        <title>TMPRSS2 and glycan receptors synergistically facilitate coronavirus entry.</title>
        <authorList>
            <person name="Wang H."/>
            <person name="Liu X."/>
            <person name="Zhang X."/>
            <person name="Zhao Z."/>
            <person name="Lu Y."/>
            <person name="Pu D."/>
            <person name="Zhang Z."/>
            <person name="Chen J."/>
            <person name="Wang Y."/>
            <person name="Li M."/>
            <person name="Dong X."/>
            <person name="Duan Y."/>
            <person name="He Y."/>
            <person name="Mao Q."/>
            <person name="Guo H."/>
            <person name="Sun H."/>
            <person name="Zhou Y."/>
            <person name="Yang Q."/>
            <person name="Gao Y."/>
            <person name="Yang X."/>
            <person name="Cao H."/>
            <person name="Guddat L."/>
            <person name="Sun L."/>
            <person name="Rao Z."/>
            <person name="Yang H."/>
        </authorList>
    </citation>
    <scope>STRUCTURE BY ELECTRON MICROSCOPY (3.01 ANGSTROMS) OF 109-492 IN COMPLEX WITH HUMAN CORONAVIRUS HKU1 SPIKE PROTEIN</scope>
    <scope>FUNCTION (MICROBIAL INFECTION)</scope>
    <scope>MUTAGENESIS OF SER-441; TYR-469 AND ARG-470</scope>
    <scope>CYSTEINE-BONDS</scope>
</reference>
<reference key="33">
    <citation type="journal article" date="2008" name="Hum. Mutat.">
        <title>An integrated genetic and functional analysis of the role of type II transmembrane serine proteases (TMPRSSs) in hearing loss.</title>
        <authorList>
            <person name="Guipponi M."/>
            <person name="Toh M.-Y."/>
            <person name="Tan J."/>
            <person name="Park D."/>
            <person name="Hanson K."/>
            <person name="Ballana E."/>
            <person name="Kwong D."/>
            <person name="Cannon P.Z.F."/>
            <person name="Wu Q."/>
            <person name="Gout A."/>
            <person name="Delorenzi M."/>
            <person name="Speed T.P."/>
            <person name="Smith R.J.H."/>
            <person name="Dahl H.-H.M."/>
            <person name="Petersen M."/>
            <person name="Teasdale R.D."/>
            <person name="Estivill X."/>
            <person name="Park W.J."/>
            <person name="Scott H.S."/>
        </authorList>
    </citation>
    <scope>VARIANTS MET-160; CYS-254; GLN-329 AND ASN-491</scope>
</reference>
<reference key="34">
    <citation type="journal article" date="2020" name="Genes (Basel)">
        <title>COVID-19 and Genetic Variants of Protein Involved in the SARS-CoV-2 Entry into the Host Cells.</title>
        <authorList>
            <person name="Latini A."/>
            <person name="Agolini E."/>
            <person name="Novelli A."/>
            <person name="Borgiani P."/>
            <person name="Giannini R."/>
            <person name="Gravina P."/>
            <person name="Smarrazzo A."/>
            <person name="Dauri M."/>
            <person name="Andreoni M."/>
            <person name="Rogliani P."/>
            <person name="Bernardini S."/>
            <person name="Helmer-Citterich M."/>
            <person name="Biancolella M."/>
            <person name="Novelli G."/>
        </authorList>
    </citation>
    <scope>VARIANTS THR-28; ARG-74 AND MET-160</scope>
</reference>
<proteinExistence type="evidence at protein level"/>
<dbReference type="EC" id="3.4.21.122" evidence="23 27 28 30"/>
<dbReference type="EMBL" id="U75329">
    <property type="protein sequence ID" value="AAC51784.1"/>
    <property type="molecule type" value="mRNA"/>
</dbReference>
<dbReference type="EMBL" id="AF123453">
    <property type="protein sequence ID" value="AAD37117.1"/>
    <property type="molecule type" value="mRNA"/>
</dbReference>
<dbReference type="EMBL" id="AF270487">
    <property type="protein sequence ID" value="AAK29280.1"/>
    <property type="molecule type" value="mRNA"/>
</dbReference>
<dbReference type="EMBL" id="AK291813">
    <property type="protein sequence ID" value="BAF84502.1"/>
    <property type="molecule type" value="mRNA"/>
</dbReference>
<dbReference type="EMBL" id="AK296860">
    <property type="protein sequence ID" value="BAH12445.1"/>
    <property type="molecule type" value="mRNA"/>
</dbReference>
<dbReference type="EMBL" id="AK313338">
    <property type="protein sequence ID" value="BAG36142.1"/>
    <property type="molecule type" value="mRNA"/>
</dbReference>
<dbReference type="EMBL" id="AK222784">
    <property type="protein sequence ID" value="BAD96504.1"/>
    <property type="molecule type" value="mRNA"/>
</dbReference>
<dbReference type="EMBL" id="AP001610">
    <property type="status" value="NOT_ANNOTATED_CDS"/>
    <property type="molecule type" value="Genomic_DNA"/>
</dbReference>
<dbReference type="EMBL" id="CH471079">
    <property type="protein sequence ID" value="EAX09597.1"/>
    <property type="molecule type" value="Genomic_DNA"/>
</dbReference>
<dbReference type="EMBL" id="CH471079">
    <property type="protein sequence ID" value="EAX09598.1"/>
    <property type="molecule type" value="Genomic_DNA"/>
</dbReference>
<dbReference type="EMBL" id="BC051839">
    <property type="protein sequence ID" value="AAH51839.1"/>
    <property type="molecule type" value="mRNA"/>
</dbReference>
<dbReference type="CCDS" id="CCDS33564.1">
    <molecule id="O15393-1"/>
</dbReference>
<dbReference type="CCDS" id="CCDS54486.1">
    <molecule id="O15393-2"/>
</dbReference>
<dbReference type="RefSeq" id="NP_001128571.1">
    <molecule id="O15393-2"/>
    <property type="nucleotide sequence ID" value="NM_001135099.1"/>
</dbReference>
<dbReference type="RefSeq" id="NP_005647.3">
    <molecule id="O15393-1"/>
    <property type="nucleotide sequence ID" value="NM_005656.3"/>
</dbReference>
<dbReference type="RefSeq" id="XP_011528033.1">
    <property type="nucleotide sequence ID" value="XM_011529731.2"/>
</dbReference>
<dbReference type="PDB" id="7MEQ">
    <property type="method" value="X-ray"/>
    <property type="resolution" value="1.95 A"/>
    <property type="chains" value="A=109-492"/>
</dbReference>
<dbReference type="PDB" id="7XYD">
    <property type="method" value="X-ray"/>
    <property type="resolution" value="2.58 A"/>
    <property type="chains" value="A/B=109-254, C/D=256-492"/>
</dbReference>
<dbReference type="PDB" id="7Y0E">
    <property type="method" value="X-ray"/>
    <property type="resolution" value="2.39 A"/>
    <property type="chains" value="A/B=109-254, C/D=256-492"/>
</dbReference>
<dbReference type="PDB" id="7Y0F">
    <property type="method" value="X-ray"/>
    <property type="resolution" value="2.60 A"/>
    <property type="chains" value="A/B=109-254, C/D=256-492"/>
</dbReference>
<dbReference type="PDB" id="8HD8">
    <property type="method" value="X-ray"/>
    <property type="resolution" value="2.40 A"/>
    <property type="chains" value="A/B=109-254, C/D=256-492"/>
</dbReference>
<dbReference type="PDB" id="8JHZ">
    <property type="method" value="EM"/>
    <property type="resolution" value="3.20 A"/>
    <property type="chains" value="B=106-492"/>
</dbReference>
<dbReference type="PDB" id="8JI0">
    <property type="method" value="EM"/>
    <property type="resolution" value="3.00 A"/>
    <property type="chains" value="B=106-492"/>
</dbReference>
<dbReference type="PDB" id="8S0L">
    <property type="method" value="X-ray"/>
    <property type="resolution" value="1.80 A"/>
    <property type="chains" value="A=107-492"/>
</dbReference>
<dbReference type="PDB" id="8S0M">
    <property type="method" value="X-ray"/>
    <property type="resolution" value="3.55 A"/>
    <property type="chains" value="B/E=107-492"/>
</dbReference>
<dbReference type="PDB" id="8S0N">
    <property type="method" value="X-ray"/>
    <property type="resolution" value="2.30 A"/>
    <property type="chains" value="A/C=107-492"/>
</dbReference>
<dbReference type="PDB" id="8V04">
    <property type="method" value="X-ray"/>
    <property type="resolution" value="1.58 A"/>
    <property type="chains" value="A=148-255, B=256-492"/>
</dbReference>
<dbReference type="PDB" id="8V1F">
    <property type="method" value="X-ray"/>
    <property type="resolution" value="2.19 A"/>
    <property type="chains" value="A/C=148-255, B/D=256-492"/>
</dbReference>
<dbReference type="PDB" id="8VGT">
    <property type="method" value="EM"/>
    <property type="resolution" value="2.90 A"/>
    <property type="chains" value="B=109-492"/>
</dbReference>
<dbReference type="PDB" id="8Y1D">
    <property type="method" value="EM"/>
    <property type="resolution" value="2.70 A"/>
    <property type="chains" value="D/E=109-492"/>
</dbReference>
<dbReference type="PDB" id="8Y1E">
    <property type="method" value="EM"/>
    <property type="resolution" value="2.70 A"/>
    <property type="chains" value="D/E/F=109-492"/>
</dbReference>
<dbReference type="PDB" id="8Y7X">
    <property type="method" value="EM"/>
    <property type="resolution" value="3.09 A"/>
    <property type="chains" value="x/y/z=109-492"/>
</dbReference>
<dbReference type="PDB" id="8Y7Y">
    <property type="method" value="EM"/>
    <property type="resolution" value="3.24 A"/>
    <property type="chains" value="T=109-492"/>
</dbReference>
<dbReference type="PDB" id="8Y87">
    <property type="method" value="EM"/>
    <property type="resolution" value="3.26 A"/>
    <property type="chains" value="T=109-492"/>
</dbReference>
<dbReference type="PDB" id="8Y88">
    <property type="method" value="EM"/>
    <property type="resolution" value="3.03 A"/>
    <property type="chains" value="I/T=109-492"/>
</dbReference>
<dbReference type="PDB" id="8Y89">
    <property type="method" value="EM"/>
    <property type="resolution" value="3.32 A"/>
    <property type="chains" value="G/T=109-492"/>
</dbReference>
<dbReference type="PDB" id="8Y8A">
    <property type="method" value="EM"/>
    <property type="resolution" value="3.19 A"/>
    <property type="chains" value="G/H/T=109-492"/>
</dbReference>
<dbReference type="PDB" id="8Y8B">
    <property type="method" value="EM"/>
    <property type="resolution" value="3.01 A"/>
    <property type="chains" value="C/T=109-492"/>
</dbReference>
<dbReference type="PDB" id="8YOY">
    <property type="method" value="EM"/>
    <property type="resolution" value="3.21 A"/>
    <property type="chains" value="B=109-492"/>
</dbReference>
<dbReference type="PDB" id="8YQQ">
    <property type="method" value="EM"/>
    <property type="resolution" value="3.95 A"/>
    <property type="chains" value="B=109-492"/>
</dbReference>
<dbReference type="PDB" id="9IZN">
    <property type="method" value="X-ray"/>
    <property type="resolution" value="2.40 A"/>
    <property type="chains" value="B=109-492"/>
</dbReference>
<dbReference type="PDBsum" id="7MEQ"/>
<dbReference type="PDBsum" id="7XYD"/>
<dbReference type="PDBsum" id="7Y0E"/>
<dbReference type="PDBsum" id="7Y0F"/>
<dbReference type="PDBsum" id="8HD8"/>
<dbReference type="PDBsum" id="8JHZ"/>
<dbReference type="PDBsum" id="8JI0"/>
<dbReference type="PDBsum" id="8S0L"/>
<dbReference type="PDBsum" id="8S0M"/>
<dbReference type="PDBsum" id="8S0N"/>
<dbReference type="PDBsum" id="8V04"/>
<dbReference type="PDBsum" id="8V1F"/>
<dbReference type="PDBsum" id="8VGT"/>
<dbReference type="PDBsum" id="8Y1D"/>
<dbReference type="PDBsum" id="8Y1E"/>
<dbReference type="PDBsum" id="8Y7X"/>
<dbReference type="PDBsum" id="8Y7Y"/>
<dbReference type="PDBsum" id="8Y87"/>
<dbReference type="PDBsum" id="8Y88"/>
<dbReference type="PDBsum" id="8Y89"/>
<dbReference type="PDBsum" id="8Y8A"/>
<dbReference type="PDBsum" id="8Y8B"/>
<dbReference type="PDBsum" id="8YOY"/>
<dbReference type="PDBsum" id="8YQQ"/>
<dbReference type="PDBsum" id="9IZN"/>
<dbReference type="EMDB" id="EMD-36301"/>
<dbReference type="EMDB" id="EMD-36303"/>
<dbReference type="EMDB" id="EMD-38832"/>
<dbReference type="EMDB" id="EMD-38833"/>
<dbReference type="EMDB" id="EMD-39025"/>
<dbReference type="EMDB" id="EMD-39026"/>
<dbReference type="EMDB" id="EMD-39036"/>
<dbReference type="EMDB" id="EMD-39037"/>
<dbReference type="EMDB" id="EMD-39038"/>
<dbReference type="EMDB" id="EMD-39039"/>
<dbReference type="EMDB" id="EMD-39040"/>
<dbReference type="EMDB" id="EMD-39460"/>
<dbReference type="EMDB" id="EMD-39502"/>
<dbReference type="EMDB" id="EMD-43224"/>
<dbReference type="SMR" id="O15393"/>
<dbReference type="BioGRID" id="112968">
    <property type="interactions" value="340"/>
</dbReference>
<dbReference type="CORUM" id="O15393"/>
<dbReference type="FunCoup" id="O15393">
    <property type="interactions" value="326"/>
</dbReference>
<dbReference type="IntAct" id="O15393">
    <property type="interactions" value="63"/>
</dbReference>
<dbReference type="STRING" id="9606.ENSP00000381588"/>
<dbReference type="BindingDB" id="O15393"/>
<dbReference type="ChEMBL" id="CHEMBL1795140"/>
<dbReference type="DrugBank" id="DB09019">
    <property type="generic name" value="Bromhexine"/>
</dbReference>
<dbReference type="DrugBank" id="DB13729">
    <property type="generic name" value="Camostat"/>
</dbReference>
<dbReference type="DrugBank" id="DB16737">
    <property type="generic name" value="MM3122"/>
</dbReference>
<dbReference type="DrugCentral" id="O15393"/>
<dbReference type="GuidetoPHARMACOLOGY" id="2421"/>
<dbReference type="MEROPS" id="S01.247"/>
<dbReference type="TCDB" id="8.A.131.1.6">
    <property type="family name" value="the transmembrane protease serine 3 (tmprss3) family"/>
</dbReference>
<dbReference type="GlyConnect" id="1848">
    <property type="glycosylation" value="4 N-Linked glycans (2 sites)"/>
</dbReference>
<dbReference type="GlyCosmos" id="O15393">
    <property type="glycosylation" value="2 sites, 4 glycans"/>
</dbReference>
<dbReference type="GlyGen" id="O15393">
    <property type="glycosylation" value="2 sites, 9 N-linked glycans (2 sites)"/>
</dbReference>
<dbReference type="iPTMnet" id="O15393"/>
<dbReference type="PhosphoSitePlus" id="O15393"/>
<dbReference type="SwissPalm" id="O15393"/>
<dbReference type="BioMuta" id="TMPRSS2"/>
<dbReference type="jPOST" id="O15393"/>
<dbReference type="MassIVE" id="O15393"/>
<dbReference type="PaxDb" id="9606-ENSP00000381588"/>
<dbReference type="PeptideAtlas" id="O15393"/>
<dbReference type="ProteomicsDB" id="31938"/>
<dbReference type="ProteomicsDB" id="48634">
    <molecule id="O15393-1"/>
</dbReference>
<dbReference type="ABCD" id="O15393">
    <property type="antibodies" value="1 sequenced antibody"/>
</dbReference>
<dbReference type="Antibodypedia" id="2685">
    <property type="antibodies" value="333 antibodies from 35 providers"/>
</dbReference>
<dbReference type="DNASU" id="7113"/>
<dbReference type="Ensembl" id="ENST00000332149.10">
    <molecule id="O15393-1"/>
    <property type="protein sequence ID" value="ENSP00000330330.5"/>
    <property type="gene ID" value="ENSG00000184012.14"/>
</dbReference>
<dbReference type="Ensembl" id="ENST00000398585.7">
    <molecule id="O15393-2"/>
    <property type="protein sequence ID" value="ENSP00000381588.3"/>
    <property type="gene ID" value="ENSG00000184012.14"/>
</dbReference>
<dbReference type="Ensembl" id="ENST00000454499.6">
    <molecule id="O15393-1"/>
    <property type="protein sequence ID" value="ENSP00000389006.2"/>
    <property type="gene ID" value="ENSG00000184012.14"/>
</dbReference>
<dbReference type="Ensembl" id="ENST00000458356.6">
    <molecule id="O15393-1"/>
    <property type="protein sequence ID" value="ENSP00000391216.1"/>
    <property type="gene ID" value="ENSG00000184012.14"/>
</dbReference>
<dbReference type="Ensembl" id="ENST00000676973.1">
    <molecule id="O15393-1"/>
    <property type="protein sequence ID" value="ENSP00000504705.1"/>
    <property type="gene ID" value="ENSG00000184012.14"/>
</dbReference>
<dbReference type="Ensembl" id="ENST00000678348.1">
    <molecule id="O15393-1"/>
    <property type="protein sequence ID" value="ENSP00000503556.1"/>
    <property type="gene ID" value="ENSG00000184012.14"/>
</dbReference>
<dbReference type="Ensembl" id="ENST00000679054.1">
    <molecule id="O15393-1"/>
    <property type="protein sequence ID" value="ENSP00000502928.1"/>
    <property type="gene ID" value="ENSG00000184012.14"/>
</dbReference>
<dbReference type="GeneID" id="7113"/>
<dbReference type="KEGG" id="hsa:7113"/>
<dbReference type="MANE-Select" id="ENST00000332149.10">
    <property type="protein sequence ID" value="ENSP00000330330.5"/>
    <property type="RefSeq nucleotide sequence ID" value="NM_005656.4"/>
    <property type="RefSeq protein sequence ID" value="NP_005647.3"/>
</dbReference>
<dbReference type="UCSC" id="uc002yzj.4">
    <molecule id="O15393-1"/>
    <property type="organism name" value="human"/>
</dbReference>
<dbReference type="AGR" id="HGNC:11876"/>
<dbReference type="CTD" id="7113"/>
<dbReference type="DisGeNET" id="7113"/>
<dbReference type="GeneCards" id="TMPRSS2"/>
<dbReference type="HGNC" id="HGNC:11876">
    <property type="gene designation" value="TMPRSS2"/>
</dbReference>
<dbReference type="HPA" id="ENSG00000184012">
    <property type="expression patterns" value="Tissue enhanced (prostate, stomach)"/>
</dbReference>
<dbReference type="MalaCards" id="TMPRSS2"/>
<dbReference type="MIM" id="602060">
    <property type="type" value="gene"/>
</dbReference>
<dbReference type="neXtProt" id="NX_O15393"/>
<dbReference type="OpenTargets" id="ENSG00000184012"/>
<dbReference type="PharmGKB" id="PA36577"/>
<dbReference type="VEuPathDB" id="HostDB:ENSG00000184012"/>
<dbReference type="eggNOG" id="KOG3627">
    <property type="taxonomic scope" value="Eukaryota"/>
</dbReference>
<dbReference type="GeneTree" id="ENSGT00940000155207"/>
<dbReference type="InParanoid" id="O15393"/>
<dbReference type="OMA" id="AQRKSWH"/>
<dbReference type="OrthoDB" id="6380398at2759"/>
<dbReference type="PAN-GO" id="O15393">
    <property type="GO annotations" value="1 GO annotation based on evolutionary models"/>
</dbReference>
<dbReference type="PhylomeDB" id="O15393"/>
<dbReference type="TreeFam" id="TF351678"/>
<dbReference type="BRENDA" id="3.4.21.B60">
    <property type="organism ID" value="2681"/>
</dbReference>
<dbReference type="PathwayCommons" id="O15393"/>
<dbReference type="Reactome" id="R-HSA-9678110">
    <property type="pathway name" value="Attachment and Entry"/>
</dbReference>
<dbReference type="Reactome" id="R-HSA-9694614">
    <property type="pathway name" value="Attachment and Entry"/>
</dbReference>
<dbReference type="Reactome" id="R-HSA-9733458">
    <property type="pathway name" value="Induction of Cell-Cell Fusion"/>
</dbReference>
<dbReference type="SABIO-RK" id="O15393"/>
<dbReference type="SignaLink" id="O15393"/>
<dbReference type="SIGNOR" id="O15393"/>
<dbReference type="BioGRID-ORCS" id="7113">
    <property type="hits" value="20 hits in 1166 CRISPR screens"/>
</dbReference>
<dbReference type="ChiTaRS" id="TMPRSS2">
    <property type="organism name" value="human"/>
</dbReference>
<dbReference type="GeneWiki" id="TMPRSS2"/>
<dbReference type="GenomeRNAi" id="7113"/>
<dbReference type="Pharos" id="O15393">
    <property type="development level" value="Tchem"/>
</dbReference>
<dbReference type="PRO" id="PR:O15393"/>
<dbReference type="Proteomes" id="UP000005640">
    <property type="component" value="Chromosome 21"/>
</dbReference>
<dbReference type="RNAct" id="O15393">
    <property type="molecule type" value="protein"/>
</dbReference>
<dbReference type="Bgee" id="ENSG00000184012">
    <property type="expression patterns" value="Expressed in mucosa of transverse colon and 159 other cell types or tissues"/>
</dbReference>
<dbReference type="ExpressionAtlas" id="O15393">
    <property type="expression patterns" value="baseline and differential"/>
</dbReference>
<dbReference type="GO" id="GO:0070062">
    <property type="term" value="C:extracellular exosome"/>
    <property type="evidence" value="ECO:0007005"/>
    <property type="project" value="UniProtKB"/>
</dbReference>
<dbReference type="GO" id="GO:0005576">
    <property type="term" value="C:extracellular region"/>
    <property type="evidence" value="ECO:0000304"/>
    <property type="project" value="Reactome"/>
</dbReference>
<dbReference type="GO" id="GO:0005654">
    <property type="term" value="C:nucleoplasm"/>
    <property type="evidence" value="ECO:0000314"/>
    <property type="project" value="HPA"/>
</dbReference>
<dbReference type="GO" id="GO:0005886">
    <property type="term" value="C:plasma membrane"/>
    <property type="evidence" value="ECO:0000314"/>
    <property type="project" value="HPA"/>
</dbReference>
<dbReference type="GO" id="GO:0004252">
    <property type="term" value="F:serine-type endopeptidase activity"/>
    <property type="evidence" value="ECO:0000314"/>
    <property type="project" value="UniProt"/>
</dbReference>
<dbReference type="GO" id="GO:0008236">
    <property type="term" value="F:serine-type peptidase activity"/>
    <property type="evidence" value="ECO:0000304"/>
    <property type="project" value="ProtInc"/>
</dbReference>
<dbReference type="GO" id="GO:0098670">
    <property type="term" value="P:entry receptor-mediated virion attachment to host cell"/>
    <property type="evidence" value="ECO:0000314"/>
    <property type="project" value="UniProt"/>
</dbReference>
<dbReference type="GO" id="GO:0046598">
    <property type="term" value="P:positive regulation of viral entry into host cell"/>
    <property type="evidence" value="ECO:0000314"/>
    <property type="project" value="UniProtKB"/>
</dbReference>
<dbReference type="GO" id="GO:0016540">
    <property type="term" value="P:protein autoprocessing"/>
    <property type="evidence" value="ECO:0000315"/>
    <property type="project" value="UniProtKB"/>
</dbReference>
<dbReference type="GO" id="GO:0006508">
    <property type="term" value="P:proteolysis"/>
    <property type="evidence" value="ECO:0000314"/>
    <property type="project" value="UniProtKB"/>
</dbReference>
<dbReference type="GO" id="GO:0019081">
    <property type="term" value="P:viral translation"/>
    <property type="evidence" value="ECO:0000304"/>
    <property type="project" value="UniProt"/>
</dbReference>
<dbReference type="CDD" id="cd00112">
    <property type="entry name" value="LDLa"/>
    <property type="match status" value="1"/>
</dbReference>
<dbReference type="CDD" id="cd00190">
    <property type="entry name" value="Tryp_SPc"/>
    <property type="match status" value="1"/>
</dbReference>
<dbReference type="FunFam" id="4.10.400.10:FF:000152">
    <property type="entry name" value="Transmembrane protease serine 2"/>
    <property type="match status" value="1"/>
</dbReference>
<dbReference type="FunFam" id="3.10.250.10:FF:000027">
    <property type="entry name" value="Transmembrane serine protease 2"/>
    <property type="match status" value="1"/>
</dbReference>
<dbReference type="FunFam" id="2.40.10.10:FF:000003">
    <property type="entry name" value="Transmembrane serine protease 3"/>
    <property type="match status" value="1"/>
</dbReference>
<dbReference type="Gene3D" id="4.10.400.10">
    <property type="entry name" value="Low-density Lipoprotein Receptor"/>
    <property type="match status" value="1"/>
</dbReference>
<dbReference type="Gene3D" id="3.10.250.10">
    <property type="entry name" value="SRCR-like domain"/>
    <property type="match status" value="1"/>
</dbReference>
<dbReference type="Gene3D" id="2.40.10.10">
    <property type="entry name" value="Trypsin-like serine proteases"/>
    <property type="match status" value="1"/>
</dbReference>
<dbReference type="InterPro" id="IPR036055">
    <property type="entry name" value="LDL_receptor-like_sf"/>
</dbReference>
<dbReference type="InterPro" id="IPR023415">
    <property type="entry name" value="LDLR_class-A_CS"/>
</dbReference>
<dbReference type="InterPro" id="IPR002172">
    <property type="entry name" value="LDrepeatLR_classA_rpt"/>
</dbReference>
<dbReference type="InterPro" id="IPR009003">
    <property type="entry name" value="Peptidase_S1_PA"/>
</dbReference>
<dbReference type="InterPro" id="IPR043504">
    <property type="entry name" value="Peptidase_S1_PA_chymotrypsin"/>
</dbReference>
<dbReference type="InterPro" id="IPR001314">
    <property type="entry name" value="Peptidase_S1A"/>
</dbReference>
<dbReference type="InterPro" id="IPR001190">
    <property type="entry name" value="SRCR"/>
</dbReference>
<dbReference type="InterPro" id="IPR036772">
    <property type="entry name" value="SRCR-like_dom_sf"/>
</dbReference>
<dbReference type="InterPro" id="IPR001254">
    <property type="entry name" value="Trypsin_dom"/>
</dbReference>
<dbReference type="InterPro" id="IPR018114">
    <property type="entry name" value="TRYPSIN_HIS"/>
</dbReference>
<dbReference type="InterPro" id="IPR033116">
    <property type="entry name" value="TRYPSIN_SER"/>
</dbReference>
<dbReference type="PANTHER" id="PTHR24252">
    <property type="entry name" value="ACROSIN-RELATED"/>
    <property type="match status" value="1"/>
</dbReference>
<dbReference type="PANTHER" id="PTHR24252:SF30">
    <property type="entry name" value="TRANSMEMBRANE SERINE PROTEASE 2"/>
    <property type="match status" value="1"/>
</dbReference>
<dbReference type="Pfam" id="PF15494">
    <property type="entry name" value="SRCR_2"/>
    <property type="match status" value="1"/>
</dbReference>
<dbReference type="Pfam" id="PF00089">
    <property type="entry name" value="Trypsin"/>
    <property type="match status" value="1"/>
</dbReference>
<dbReference type="PRINTS" id="PR00722">
    <property type="entry name" value="CHYMOTRYPSIN"/>
</dbReference>
<dbReference type="SMART" id="SM00192">
    <property type="entry name" value="LDLa"/>
    <property type="match status" value="1"/>
</dbReference>
<dbReference type="SMART" id="SM00202">
    <property type="entry name" value="SR"/>
    <property type="match status" value="1"/>
</dbReference>
<dbReference type="SMART" id="SM00020">
    <property type="entry name" value="Tryp_SPc"/>
    <property type="match status" value="1"/>
</dbReference>
<dbReference type="SUPFAM" id="SSF57424">
    <property type="entry name" value="LDL receptor-like module"/>
    <property type="match status" value="1"/>
</dbReference>
<dbReference type="SUPFAM" id="SSF56487">
    <property type="entry name" value="SRCR-like"/>
    <property type="match status" value="1"/>
</dbReference>
<dbReference type="SUPFAM" id="SSF50494">
    <property type="entry name" value="Trypsin-like serine proteases"/>
    <property type="match status" value="1"/>
</dbReference>
<dbReference type="PROSITE" id="PS01209">
    <property type="entry name" value="LDLRA_1"/>
    <property type="match status" value="1"/>
</dbReference>
<dbReference type="PROSITE" id="PS50068">
    <property type="entry name" value="LDLRA_2"/>
    <property type="match status" value="1"/>
</dbReference>
<dbReference type="PROSITE" id="PS50287">
    <property type="entry name" value="SRCR_2"/>
    <property type="match status" value="1"/>
</dbReference>
<dbReference type="PROSITE" id="PS50240">
    <property type="entry name" value="TRYPSIN_DOM"/>
    <property type="match status" value="1"/>
</dbReference>
<dbReference type="PROSITE" id="PS00134">
    <property type="entry name" value="TRYPSIN_HIS"/>
    <property type="match status" value="1"/>
</dbReference>
<dbReference type="PROSITE" id="PS00135">
    <property type="entry name" value="TRYPSIN_SER"/>
    <property type="match status" value="1"/>
</dbReference>
<accession>O15393</accession>
<accession>A8K6Z8</accession>
<accession>B2R8E5</accession>
<accession>B7Z459</accession>
<accession>D3DSJ2</accession>
<accession>F8WES1</accession>
<accession>Q6GTK7</accession>
<accession>Q9BXX1</accession>
<organism>
    <name type="scientific">Homo sapiens</name>
    <name type="common">Human</name>
    <dbReference type="NCBI Taxonomy" id="9606"/>
    <lineage>
        <taxon>Eukaryota</taxon>
        <taxon>Metazoa</taxon>
        <taxon>Chordata</taxon>
        <taxon>Craniata</taxon>
        <taxon>Vertebrata</taxon>
        <taxon>Euteleostomi</taxon>
        <taxon>Mammalia</taxon>
        <taxon>Eutheria</taxon>
        <taxon>Euarchontoglires</taxon>
        <taxon>Primates</taxon>
        <taxon>Haplorrhini</taxon>
        <taxon>Catarrhini</taxon>
        <taxon>Hominidae</taxon>
        <taxon>Homo</taxon>
    </lineage>
</organism>